<keyword id="KW-0002">3D-structure</keyword>
<keyword id="KW-0025">Alternative splicing</keyword>
<keyword id="KW-0040">ANK repeat</keyword>
<keyword id="KW-0067">ATP-binding</keyword>
<keyword id="KW-0106">Calcium</keyword>
<keyword id="KW-0107">Calcium channel</keyword>
<keyword id="KW-0109">Calcium transport</keyword>
<keyword id="KW-0112">Calmodulin-binding</keyword>
<keyword id="KW-0965">Cell junction</keyword>
<keyword id="KW-1003">Cell membrane</keyword>
<keyword id="KW-0966">Cell projection</keyword>
<keyword id="KW-0144">Charcot-Marie-Tooth disease</keyword>
<keyword id="KW-0969">Cilium</keyword>
<keyword id="KW-0225">Disease variant</keyword>
<keyword id="KW-0242">Dwarfism</keyword>
<keyword id="KW-0256">Endoplasmic reticulum</keyword>
<keyword id="KW-0407">Ion channel</keyword>
<keyword id="KW-0406">Ion transport</keyword>
<keyword id="KW-0446">Lipid-binding</keyword>
<keyword id="KW-0472">Membrane</keyword>
<keyword id="KW-0479">Metal-binding</keyword>
<keyword id="KW-0523">Neurodegeneration</keyword>
<keyword id="KW-0622">Neuropathy</keyword>
<keyword id="KW-0547">Nucleotide-binding</keyword>
<keyword id="KW-0597">Phosphoprotein</keyword>
<keyword id="KW-1267">Proteomics identification</keyword>
<keyword id="KW-1185">Reference proteome</keyword>
<keyword id="KW-0677">Repeat</keyword>
<keyword id="KW-0812">Transmembrane</keyword>
<keyword id="KW-1133">Transmembrane helix</keyword>
<keyword id="KW-0813">Transport</keyword>
<evidence type="ECO:0000250" key="1">
    <source>
        <dbReference type="UniProtKB" id="A0A1D5PXA5"/>
    </source>
</evidence>
<evidence type="ECO:0000250" key="2">
    <source>
        <dbReference type="UniProtKB" id="O35433"/>
    </source>
</evidence>
<evidence type="ECO:0000250" key="3">
    <source>
        <dbReference type="UniProtKB" id="Q9EPK8"/>
    </source>
</evidence>
<evidence type="ECO:0000250" key="4">
    <source>
        <dbReference type="UniProtKB" id="Q9R186"/>
    </source>
</evidence>
<evidence type="ECO:0000256" key="5">
    <source>
        <dbReference type="SAM" id="MobiDB-lite"/>
    </source>
</evidence>
<evidence type="ECO:0000269" key="6">
    <source>
    </source>
</evidence>
<evidence type="ECO:0000269" key="7">
    <source>
    </source>
</evidence>
<evidence type="ECO:0000269" key="8">
    <source>
    </source>
</evidence>
<evidence type="ECO:0000269" key="9">
    <source>
    </source>
</evidence>
<evidence type="ECO:0000269" key="10">
    <source>
    </source>
</evidence>
<evidence type="ECO:0000269" key="11">
    <source>
    </source>
</evidence>
<evidence type="ECO:0000269" key="12">
    <source>
    </source>
</evidence>
<evidence type="ECO:0000269" key="13">
    <source>
    </source>
</evidence>
<evidence type="ECO:0000269" key="14">
    <source>
    </source>
</evidence>
<evidence type="ECO:0000269" key="15">
    <source>
    </source>
</evidence>
<evidence type="ECO:0000269" key="16">
    <source>
    </source>
</evidence>
<evidence type="ECO:0000269" key="17">
    <source>
    </source>
</evidence>
<evidence type="ECO:0000269" key="18">
    <source>
    </source>
</evidence>
<evidence type="ECO:0000269" key="19">
    <source>
    </source>
</evidence>
<evidence type="ECO:0000269" key="20">
    <source>
    </source>
</evidence>
<evidence type="ECO:0000269" key="21">
    <source>
    </source>
</evidence>
<evidence type="ECO:0000269" key="22">
    <source>
    </source>
</evidence>
<evidence type="ECO:0000269" key="23">
    <source>
    </source>
</evidence>
<evidence type="ECO:0000269" key="24">
    <source>
    </source>
</evidence>
<evidence type="ECO:0000269" key="25">
    <source>
    </source>
</evidence>
<evidence type="ECO:0000269" key="26">
    <source>
    </source>
</evidence>
<evidence type="ECO:0000269" key="27">
    <source>
    </source>
</evidence>
<evidence type="ECO:0000269" key="28">
    <source>
    </source>
</evidence>
<evidence type="ECO:0000269" key="29">
    <source>
    </source>
</evidence>
<evidence type="ECO:0000269" key="30">
    <source>
    </source>
</evidence>
<evidence type="ECO:0000269" key="31">
    <source>
    </source>
</evidence>
<evidence type="ECO:0000269" key="32">
    <source ref="6"/>
</evidence>
<evidence type="ECO:0000303" key="33">
    <source>
    </source>
</evidence>
<evidence type="ECO:0000303" key="34">
    <source>
    </source>
</evidence>
<evidence type="ECO:0000303" key="35">
    <source>
    </source>
</evidence>
<evidence type="ECO:0000303" key="36">
    <source>
    </source>
</evidence>
<evidence type="ECO:0000303" key="37">
    <source ref="6"/>
</evidence>
<evidence type="ECO:0000305" key="38"/>
<evidence type="ECO:0007744" key="39">
    <source>
        <dbReference type="PDB" id="4DX2"/>
    </source>
</evidence>
<evidence type="ECO:0007829" key="40">
    <source>
        <dbReference type="PDB" id="4DX1"/>
    </source>
</evidence>
<evidence type="ECO:0007829" key="41">
    <source>
        <dbReference type="PDB" id="8FC7"/>
    </source>
</evidence>
<evidence type="ECO:0007829" key="42">
    <source>
        <dbReference type="PDB" id="8FC8"/>
    </source>
</evidence>
<evidence type="ECO:0007829" key="43">
    <source>
        <dbReference type="PDB" id="8FCA"/>
    </source>
</evidence>
<evidence type="ECO:0007829" key="44">
    <source>
        <dbReference type="PDB" id="8JU6"/>
    </source>
</evidence>
<evidence type="ECO:0007829" key="45">
    <source>
        <dbReference type="PDB" id="8JVI"/>
    </source>
</evidence>
<evidence type="ECO:0007829" key="46">
    <source>
        <dbReference type="PDB" id="8T1B"/>
    </source>
</evidence>
<evidence type="ECO:0007829" key="47">
    <source>
        <dbReference type="PDB" id="8T1D"/>
    </source>
</evidence>
<evidence type="ECO:0007829" key="48">
    <source>
        <dbReference type="PDB" id="8T1E"/>
    </source>
</evidence>
<comment type="function">
    <text evidence="3 6 7 8 10 11 12 14 15 23 27 28 29 31">Non-selective calcium permeant cation channel involved in osmotic sensitivity and mechanosensitivity (PubMed:16293632, PubMed:18695040, PubMed:18826956, PubMed:22526352, PubMed:23136043, PubMed:29899501). Activation by exposure to hypotonicity within the physiological range exhibits an outward rectification (PubMed:18695040, PubMed:18826956, PubMed:29899501). Also activated by heat, low pH, citrate and phorbol esters (PubMed:16293632, PubMed:18695040, PubMed:18826956, PubMed:20037586, PubMed:21964574, PubMed:25256292). Increase of intracellular Ca(2+) potentiates currents. Channel activity seems to be regulated by a calmodulin-dependent mechanism with a negative feedback mechanism (PubMed:12724311, PubMed:18826956). Promotes cell-cell junction formation in skin keratinocytes and plays an important role in the formation and/or maintenance of functional intercellular barriers (By similarity). Acts as a regulator of intracellular Ca(2+) in synoviocytes (PubMed:19759329). Plays an obligatory role as a molecular component in the nonselective cation channel activation induced by 4-alpha-phorbol 12,13-didecanoate and hypotonic stimulation in synoviocytes and also regulates production of IL-8 (PubMed:19759329). Together with PKD2, forms mechano- and thermosensitive channels in cilium (PubMed:18695040). Negatively regulates expression of PPARGC1A, UCP1, oxidative metabolism and respiration in adipocytes (By similarity). Regulates expression of chemokines and cytokines related to pro-inflammatory pathway in adipocytes (By similarity). Together with AQP5, controls regulatory volume decrease in salivary epithelial cells (By similarity). Required for normal development and maintenance of bone and cartilage (PubMed:26249260). In its inactive state, may sequester DDX3X at the plasma membrane. When activated, the interaction between both proteins is affected and DDX3X relocalizes to the nucleus (PubMed:29899501). In neurons of the central nervous system, could play a role in triggering voluntary water intake in response to increased sodium concentration in body fluid (By similarity).</text>
</comment>
<comment type="function">
    <molecule>Isoform 1</molecule>
    <text evidence="8">Non-selective calcium permeant cation channel involved in osmotic sensitivity and mechanosensitivity. Activation by exposure to hypotonicity within the physiological range exhibits an outward rectification. Also activated by phorbol esters. Has the same channel activity as isoform 1, and is activated by the same stimuli.</text>
</comment>
<comment type="function">
    <molecule>Isoform 5</molecule>
    <text evidence="8">Non-selective calcium permeant cation channel involved in osmotic sensitivity and mechanosensitivity. Activation by exposure to hypotonicity within the physiological range exhibits an outward rectification. Also activated by phorbol esters. Has the same channel activity as isoform 1, and is activated by the same stimuli.</text>
</comment>
<comment type="function">
    <molecule>Isoform 2</molecule>
    <text evidence="8">Lacks channel activity, due to impaired oligomerization and intracellular retention.</text>
</comment>
<comment type="function">
    <molecule>Isoform 4</molecule>
    <text evidence="8">Lacks channel activity, due to impaired oligomerization and intracellular retention.</text>
</comment>
<comment type="function">
    <molecule>Isoform 6</molecule>
    <text evidence="8">Lacks channel activity, due to impaired oligomerization and intracellular retention.</text>
</comment>
<comment type="function">
    <text evidence="31">(Microbial infection) Facilitates hepatitis C virus (HCV) replication, possibly through its action on DDX3X.</text>
</comment>
<comment type="function">
    <text evidence="31">(Microbial infection) Facilitates Dengue virus (DENV) replication, possibly through its action on DDX3X.</text>
</comment>
<comment type="function">
    <text evidence="31">(Microbial infection) Facilitates Zika virus (ZIKV) replication, possibly through its action on DDX3X.</text>
</comment>
<comment type="catalytic activity">
    <reaction evidence="6 8 10 11 12 15 23 25 27 28 31">
        <text>Ca(2+)(in) = Ca(2+)(out)</text>
        <dbReference type="Rhea" id="RHEA:29671"/>
        <dbReference type="ChEBI" id="CHEBI:29108"/>
    </reaction>
</comment>
<comment type="catalytic activity">
    <molecule>Isoform 1</molecule>
    <reaction evidence="8">
        <text>Ca(2+)(in) = Ca(2+)(out)</text>
        <dbReference type="Rhea" id="RHEA:29671"/>
        <dbReference type="ChEBI" id="CHEBI:29108"/>
    </reaction>
</comment>
<comment type="catalytic activity">
    <molecule>Isoform 5</molecule>
    <reaction evidence="8">
        <text>Ca(2+)(in) = Ca(2+)(out)</text>
        <dbReference type="Rhea" id="RHEA:29671"/>
        <dbReference type="ChEBI" id="CHEBI:29108"/>
    </reaction>
</comment>
<comment type="activity regulation">
    <text evidence="28">Channel activation is inhibited by binding to phosphatidylinositol-4,5-bisphosphate, and to a much lesser degree by phosphatidylinositol-3,4,5-trisphosphate. Not inhibited by phosphatidylinositol-3,4-bisphosphate and phosphatidylinositol-3,5-bisphosphate.</text>
</comment>
<comment type="subunit">
    <text evidence="3 7 8 11 12 24 26 31 38">Homotetramer (Probable). Self-associates in an isoform-specific manner (PubMed:16293632). Isoform 1 and isoform 5 can oligomerize, but isoform 2, isoform 4 and isoform 6 cannot oligomerize (PubMed:16293632). Interacts with calmodulin (PubMed:12724311). Interacts with Map7 and Src family Tyr protein kinases LYN, SRC, FYN, HCK, LCK and YES (By similarity). Interacts with CTNNB1 (By similarity). The TRPV4 and CTNNB1 complex can interact with CDH1 (By similarity). Interacts with PACSIN1, PACSIN2 and PACSIN3 (via SH3 domain) (By similarity). Part of a complex containing MLC1, AQP4, HEPACAM and ATP1B1 (PubMed:22328087). Interacts with ITPR3 (PubMed:18826956). Interacts with AQP5; the interaction is probably indirect and regulates TRPV4 activation by hypotonicity (By similarity). Interacts with ANO1 (By similarity). Interacts (via C-terminus) with PKD2 (via C-terminus) (PubMed:18695040). Interacts with DDX3X; this interaction is decreased when the channel is activated (PubMed:29899501).</text>
</comment>
<comment type="interaction">
    <interactant intactId="EBI-962786">
        <id>Q9HBA0</id>
    </interactant>
    <interactant intactId="EBI-962786">
        <id>Q9HBA0</id>
        <label>TRPV4</label>
    </interactant>
    <organismsDiffer>false</organismsDiffer>
    <experiments>3</experiments>
</comment>
<comment type="interaction">
    <interactant intactId="EBI-962786">
        <id>Q9HBA0</id>
    </interactant>
    <interactant intactId="EBI-15907593">
        <id>P47863</id>
        <label>Aqp4</label>
    </interactant>
    <organismsDiffer>true</organismsDiffer>
    <experiments>2</experiments>
</comment>
<comment type="interaction">
    <interactant intactId="EBI-962786">
        <id>Q9HBA0</id>
    </interactant>
    <interactant intactId="EBI-15907676">
        <id>P47863-1</id>
        <label>Aqp4</label>
    </interactant>
    <organismsDiffer>true</organismsDiffer>
    <experiments>2</experiments>
</comment>
<comment type="interaction">
    <interactant intactId="EBI-10048039">
        <id>Q9HBA0-5</id>
    </interactant>
    <interactant intactId="EBI-961969">
        <id>Q9HBA0-1</id>
        <label>TRPV4</label>
    </interactant>
    <organismsDiffer>false</organismsDiffer>
    <experiments>3</experiments>
</comment>
<comment type="subcellular location">
    <subcellularLocation>
        <location evidence="9 31">Cell membrane</location>
    </subcellularLocation>
    <subcellularLocation>
        <location evidence="11 12">Apical cell membrane</location>
        <topology evidence="38">Multi-pass membrane protein</topology>
    </subcellularLocation>
    <subcellularLocation>
        <location evidence="3">Cell junction</location>
        <location evidence="3">Adherens junction</location>
    </subcellularLocation>
    <subcellularLocation>
        <location evidence="11">Cell projection</location>
        <location evidence="11">Cilium</location>
    </subcellularLocation>
    <text evidence="8 9 16 17">Assembly of the putative homotetramer occurs primarily in the endoplasmic reticulum (PubMed:16293632, PubMed:20037587, PubMed:20037588). Localization to the cell membrane is inhibited by WNK kinases (WNK1, WNK2, WNK3 or WNK4) in a kinase-independent mechanism (PubMed:16403833).</text>
</comment>
<comment type="subcellular location">
    <molecule>Isoform 1</molecule>
    <subcellularLocation>
        <location evidence="8 23 28">Cell membrane</location>
    </subcellularLocation>
</comment>
<comment type="subcellular location">
    <molecule>Isoform 5</molecule>
    <subcellularLocation>
        <location evidence="8">Cell membrane</location>
    </subcellularLocation>
</comment>
<comment type="subcellular location">
    <molecule>Isoform 2</molecule>
    <subcellularLocation>
        <location evidence="8">Endoplasmic reticulum</location>
    </subcellularLocation>
</comment>
<comment type="subcellular location">
    <molecule>Isoform 4</molecule>
    <subcellularLocation>
        <location evidence="8">Endoplasmic reticulum</location>
    </subcellularLocation>
</comment>
<comment type="subcellular location">
    <molecule>Isoform 6</molecule>
    <subcellularLocation>
        <location evidence="8">Endoplasmic reticulum</location>
    </subcellularLocation>
</comment>
<comment type="alternative products">
    <event type="alternative splicing"/>
    <isoform>
        <id>Q9HBA0-1</id>
        <name>1</name>
        <name>A</name>
        <sequence type="displayed"/>
    </isoform>
    <isoform>
        <id>Q9HBA0-2</id>
        <name>2</name>
        <name>B</name>
        <name>OTRPC4beta</name>
        <sequence type="described" ref="VSP_013436"/>
    </isoform>
    <isoform>
        <id>Q9HBA0-3</id>
        <name>3</name>
        <name>TRPV-SV</name>
        <sequence type="described" ref="VSP_013437"/>
    </isoform>
    <isoform>
        <id>Q9HBA0-4</id>
        <name>4</name>
        <name>C</name>
        <sequence type="described" ref="VSP_026615"/>
    </isoform>
    <isoform>
        <id>Q9HBA0-5</id>
        <name>5</name>
        <name>D</name>
        <sequence type="described" ref="VSP_026614"/>
    </isoform>
    <isoform>
        <id>Q9HBA0-6</id>
        <name>6</name>
        <name>E</name>
        <sequence type="described" ref="VSP_026615 VSP_013436"/>
    </isoform>
</comment>
<comment type="tissue specificity">
    <text evidence="14">Found in the synoviocytes from patients with (RA) and without (CTR) rheumatoid arthritis (at protein level).</text>
</comment>
<comment type="domain">
    <text evidence="1 28">The ANK repeat region mediates interaction with Ca(2+)-calmodulin and ATP binding (By similarity). The ANK repeat region mediates interaction with phosphatidylinositol-4,5-bisphosphate and related phosphatidylinositides (PubMed:25256292).</text>
</comment>
<comment type="PTM">
    <text evidence="8 23">N-glycosylated.</text>
</comment>
<comment type="polymorphism">
    <text>Genetic variations in TRPV4 determine the sodium serum level quantitative trait locus 1 (SSQTL1) [MIM:613508]. In some populations, variant Pro19Ser has been shown to be significantly associated with hyponatremia defined as serum sodium concentration below or equal to 135 mEq/L.</text>
</comment>
<comment type="disease" evidence="10">
    <disease id="DI-01292">
        <name>Brachyolmia 3</name>
        <acronym>BCYM3</acronym>
        <description>A form of brachyolmia, a clinically and genetically heterogeneous skeletal dysplasia primarily affecting the spine and characterized by a short trunk, short stature, and platyspondyly. BCYM3 is an autosomal dominant form with severe scoliosis with or without kyphosis, and flattened irregular cervical vertebrae.</description>
        <dbReference type="MIM" id="113500"/>
    </disease>
    <text>The disease is caused by variants affecting the gene represented in this entry.</text>
</comment>
<comment type="disease" evidence="13 20 26">
    <disease id="DI-02480">
        <name>Spondylometaphyseal dysplasia Kozlowski type</name>
        <acronym>SMDK</acronym>
        <description>A form of spondylometaphyseal dysplasia, a group of short stature disorders distinguished by abnormalities in the vertebrae and the metaphyses of the tubular bones. It is characterized by postnatal dwarfism, significant scoliosis and mild metaphyseal abnormalities in the pelvis. The vertebrae exhibit platyspondyly and overfaced pedicles.</description>
        <dbReference type="MIM" id="184252"/>
    </disease>
    <text>The disease is caused by variants affecting the gene represented in this entry.</text>
</comment>
<comment type="disease" evidence="13 18 20 26 29 32">
    <disease id="DI-02481">
        <name>Metatropic dysplasia</name>
        <acronym>MTD</acronym>
        <description>A severe spondyloepimetaphyseal dysplasia characterized by short limbs with limitation and enlargement of joints and usually severe kyphoscoliosis. Radiologic features include severe platyspondyly, severe metaphyseal enlargement and shortening of long bones.</description>
        <dbReference type="MIM" id="156530"/>
    </disease>
    <text>The disease is caused by variants affecting the gene represented in this entry.</text>
</comment>
<comment type="disease" evidence="17 25 26">
    <disease id="DI-02688">
        <name>Neuronopathy, distal hereditary motor, autosomal dominant 8</name>
        <acronym>HMND8</acronym>
        <description>A form of distal hereditary motor neuronopathy, a heterogeneous group of neuromuscular disorders caused by selective degeneration of motor neurons in the anterior horn of the spinal cord, without sensory deficit in the posterior horn. The overall clinical picture consists of a classical distal muscular atrophy syndrome in the legs without clinical sensory loss. The disease starts with weakness and wasting of distal muscles of the anterior tibial and peroneal compartments of the legs. Later on, weakness and atrophy may expand to the proximal muscles of the lower limbs and/or to the distal upper limbs.</description>
        <dbReference type="MIM" id="600175"/>
    </disease>
    <text>The disease is caused by variants affecting the gene represented in this entry.</text>
</comment>
<comment type="disease" evidence="15 16 17 21 22 26 28">
    <disease id="DI-02687">
        <name>Charcot-Marie-Tooth disease, axonal, autosomal dominant, type 2C</name>
        <acronym>CMT2C</acronym>
        <description>An axonal form of Charcot-Marie-Tooth disease, a disorder of the peripheral nervous system, characterized by progressive weakness and atrophy, initially of the peroneal muscles and later of the distal muscles of the arms. Charcot-Marie-Tooth disease is classified in two main groups on the basis of electrophysiologic properties and histopathology: primary peripheral demyelinating neuropathies (designated CMT1 when they are dominantly inherited) and primary peripheral axonal neuropathies (CMT2). Neuropathies of the CMT2 group are characterized by signs of axonal degeneration in the absence of obvious myelin alterations, normal or slightly reduced nerve conduction velocities, and progressive distal muscle weakness and atrophy.</description>
        <dbReference type="MIM" id="606071"/>
    </disease>
    <text>The disease is caused by variants affecting the gene represented in this entry.</text>
</comment>
<comment type="disease" evidence="16 26">
    <disease id="DI-02689">
        <name>Scapuloperoneal spinal muscular atrophy</name>
        <acronym>SPSMA</acronym>
        <description>A clinically variable neuromuscular disorder characterized by neurogenic scapuloperoneal amyotrophy, laryngeal palsy, congenital absence of muscles, progressive scapuloperoneal atrophy and progressive distal weakness and amyotrophy.</description>
        <dbReference type="MIM" id="181405"/>
    </disease>
    <text>The disease is caused by variants affecting the gene represented in this entry.</text>
</comment>
<comment type="disease" evidence="19 26">
    <disease id="DI-02969">
        <name>Spondyloepiphyseal dysplasia Maroteaux type</name>
        <acronym>SEDM</acronym>
        <description>A clinically variable spondyloepiphyseal dysplasia with manifestations limited to the musculoskeletal system. Clinical features include short stature, brachydactyly, platyspondyly, short and stubby hands and feet, epiphyseal hypoplasia of the large joints, and iliac hypoplasia. Intelligence is normal.</description>
        <dbReference type="MIM" id="184095"/>
    </disease>
    <text>The disease is caused by variants affecting the gene represented in this entry.</text>
</comment>
<comment type="disease" evidence="19">
    <disease id="DI-02970">
        <name>Parastremmatic dwarfism</name>
        <acronym>PSTD</acronym>
        <description>A bone dysplasia characterized by severe dwarfism, kyphoscoliosis, distortion and bowing of the extremities, and contractures of the large joints. Radiographically, the disease is characterized by a combination of decreased bone density, bowing of the long bones, platyspondyly and striking irregularities of endochondral ossification with areas of calcific stippling and streaking in radiolucent epiphyses, metaphyses and apophyses.</description>
        <dbReference type="MIM" id="168400"/>
    </disease>
    <text>The disease is caused by variants affecting the gene represented in this entry.</text>
</comment>
<comment type="disease" evidence="23">
    <disease id="DI-03486">
        <name>Digital arthropathy-brachydactyly, familial</name>
        <acronym>FDAB</acronym>
        <description>A disorder characterized by irregularities in the proximal articular surfaces of the distal interphalangeal joints of the hand. Individuals appear normal at birth, with no clinical or radiographic evidence of a developmental skeletal dysplasia. The earliest changes appear during the first decade of life. By adulthood, all interphalangeal, metacarpophalangeal, and metatarsophalangeal joints are affected by a deforming, painful osteoarthritis. The remainder of the skeleton is clinically and radiographically unaffected.</description>
        <dbReference type="MIM" id="606835"/>
    </disease>
    <text>The disease is caused by variants affecting the gene represented in this entry.</text>
</comment>
<comment type="disease" evidence="30">
    <disease id="DI-04965">
        <name>Avascular necrosis of the femoral head, primary 2</name>
        <acronym>ANFH2</acronym>
        <description>A disease characterized by mechanical failure of the subchondral bone, and degeneration of the hip joint. It usually leads to destruction of the hip joint in the third to fifth decade of life. The clinical manifestations, such as pain on exertion, a limping gait, and a discrepancy in leg length, cause considerable disability.</description>
        <dbReference type="MIM" id="617383"/>
    </disease>
    <text>The disease is caused by variants affecting the gene represented in this entry.</text>
</comment>
<comment type="miscellaneous">
    <molecule>Isoform 2</molecule>
    <text evidence="8">Lacks channel activity, due to impaired oligomerization and intracellular retention.</text>
</comment>
<comment type="miscellaneous">
    <molecule>Isoform 4</molecule>
    <text evidence="8">Lacks channel activity, due to impaired oligomerization and intracellular retention.</text>
</comment>
<comment type="miscellaneous">
    <molecule>Isoform 5</molecule>
    <text evidence="8">Forms active ion channels.</text>
</comment>
<comment type="miscellaneous">
    <molecule>Isoform 6</molecule>
    <text evidence="8">Lacks channel activity, due to impaired oligomerization and intracellular retention.</text>
</comment>
<comment type="similarity">
    <text evidence="38">Belongs to the transient receptor (TC 1.A.4) family. TrpV subfamily. TRPV4 sub-subfamily.</text>
</comment>
<name>TRPV4_HUMAN</name>
<sequence>MADSSEGPRAGPGEVAELPGDESGTPGGEAFPLSSLANLFEGEDGSLSPSPADASRPAGPGDGRPNLRMKFQGAFRKGVPNPIDLLESTLYESSVVPGPKKAPMDSLFDYGTYRHHSSDNKRWRKKIIEKQPQSPKAPAPQPPPILKVFNRPILFDIVSRGSTADLDGLLPFLLTHKKRLTDEEFREPSTGKTCLPKALLNLSNGRNDTIPVLLDIAERTGNMREFINSPFRDIYYRGQTALHIAIERRCKHYVELLVAQGADVHAQARGRFFQPKDEGGYFYFGELPLSLAACTNQPHIVNYLTENPHKKADMRRQDSRGNTVLHALVAIADNTRENTKFVTKMYDLLLLKCARLFPDSNLEAVLNNDGLSPLMMAAKTGKIGIFQHIIRREVTDEDTRHLSRKFKDWAYGPVYSSLYDLSSLDTCGEEASVLEILVYNSKIENRHEMLAVEPINELLRDKWRKFGAVSFYINVVSYLCAMVIFTLTAYYQPLEGTPPYPYRTTVDYLRLAGEVITLFTGVLFFFTNIKDLFMKKCPGVNSLFIDGSFQLLYFIYSVLVIVSAALYLAGIEAYLAVMVFALVLGWMNALYFTRGLKLTGTYSIMIQKILFKDLFRFLLVYLLFMIGYASALVSLLNPCANMKVCNEDQTNCTVPTYPSCRDSETFSTFLLDLFKLTIGMGDLEMLSSTKYPVVFIILLVTYIILTFVLLLNMLIALMGETVGQVSKESKHIWKLQWATTILDIERSFPVFLRKAFRSGEMVTVGKSSDGTPDRRWCFRVDEVNWSHWNQNLGIINEDPGKNETYQYYGFSHTVGRLRRDRWSSVVPRVVELNKNSNPDEVVVPLDSMGNPRCDGHQQGYPRKWRTDDAPL</sequence>
<gene>
    <name type="primary">TRPV4</name>
    <name type="synonym">VRL2</name>
    <name type="synonym">VROAC</name>
</gene>
<accession>Q9HBA0</accession>
<accession>B7ZKQ6</accession>
<accession>Q17R79</accession>
<accession>Q2Y122</accession>
<accession>Q2Y123</accession>
<accession>Q2Y124</accession>
<accession>Q86YZ6</accession>
<accession>Q8NDY7</accession>
<accession>Q8NG64</accession>
<accession>Q96Q92</accession>
<accession>Q96RS7</accession>
<accession>Q9HBC0</accession>
<dbReference type="EMBL" id="AF263523">
    <property type="protein sequence ID" value="AAG28029.1"/>
    <property type="molecule type" value="mRNA"/>
</dbReference>
<dbReference type="EMBL" id="AF258465">
    <property type="protein sequence ID" value="AAG16127.1"/>
    <property type="molecule type" value="mRNA"/>
</dbReference>
<dbReference type="EMBL" id="AB100308">
    <property type="protein sequence ID" value="BAC55864.1"/>
    <property type="molecule type" value="mRNA"/>
</dbReference>
<dbReference type="EMBL" id="AB032427">
    <property type="protein sequence ID" value="BAB69040.1"/>
    <property type="molecule type" value="mRNA"/>
</dbReference>
<dbReference type="EMBL" id="AB073669">
    <property type="protein sequence ID" value="BAC06573.1"/>
    <property type="molecule type" value="mRNA"/>
</dbReference>
<dbReference type="EMBL" id="AJ296305">
    <property type="protein sequence ID" value="CAC82937.1"/>
    <property type="molecule type" value="mRNA"/>
</dbReference>
<dbReference type="EMBL" id="DQ059644">
    <property type="protein sequence ID" value="AAZ04918.1"/>
    <property type="molecule type" value="mRNA"/>
</dbReference>
<dbReference type="EMBL" id="DQ059645">
    <property type="protein sequence ID" value="AAZ04919.1"/>
    <property type="molecule type" value="mRNA"/>
</dbReference>
<dbReference type="EMBL" id="DQ059646">
    <property type="protein sequence ID" value="AAZ04920.1"/>
    <property type="molecule type" value="mRNA"/>
</dbReference>
<dbReference type="EMBL" id="CH471054">
    <property type="protein sequence ID" value="EAW97879.1"/>
    <property type="molecule type" value="Genomic_DNA"/>
</dbReference>
<dbReference type="EMBL" id="BC117426">
    <property type="protein sequence ID" value="AAI17427.1"/>
    <property type="molecule type" value="mRNA"/>
</dbReference>
<dbReference type="EMBL" id="BC143315">
    <property type="protein sequence ID" value="AAI43316.1"/>
    <property type="molecule type" value="mRNA"/>
</dbReference>
<dbReference type="EMBL" id="AF279673">
    <property type="protein sequence ID" value="AAK69487.1"/>
    <property type="molecule type" value="mRNA"/>
</dbReference>
<dbReference type="CCDS" id="CCDS53827.1">
    <molecule id="Q9HBA0-6"/>
</dbReference>
<dbReference type="CCDS" id="CCDS53828.1">
    <molecule id="Q9HBA0-4"/>
</dbReference>
<dbReference type="CCDS" id="CCDS53829.1">
    <molecule id="Q9HBA0-5"/>
</dbReference>
<dbReference type="CCDS" id="CCDS9134.1">
    <molecule id="Q9HBA0-1"/>
</dbReference>
<dbReference type="CCDS" id="CCDS9135.1">
    <molecule id="Q9HBA0-2"/>
</dbReference>
<dbReference type="RefSeq" id="NP_001170899.1">
    <molecule id="Q9HBA0-4"/>
    <property type="nucleotide sequence ID" value="NM_001177428.1"/>
</dbReference>
<dbReference type="RefSeq" id="NP_001170902.1">
    <molecule id="Q9HBA0-5"/>
    <property type="nucleotide sequence ID" value="NM_001177431.1"/>
</dbReference>
<dbReference type="RefSeq" id="NP_001170904.1">
    <molecule id="Q9HBA0-6"/>
    <property type="nucleotide sequence ID" value="NM_001177433.1"/>
</dbReference>
<dbReference type="RefSeq" id="NP_067638.3">
    <molecule id="Q9HBA0-1"/>
    <property type="nucleotide sequence ID" value="NM_021625.4"/>
</dbReference>
<dbReference type="RefSeq" id="NP_671737.1">
    <molecule id="Q9HBA0-2"/>
    <property type="nucleotide sequence ID" value="NM_147204.2"/>
</dbReference>
<dbReference type="RefSeq" id="XP_005253975.1">
    <property type="nucleotide sequence ID" value="XM_005253918.1"/>
</dbReference>
<dbReference type="RefSeq" id="XP_016875263.1">
    <molecule id="Q9HBA0-1"/>
    <property type="nucleotide sequence ID" value="XM_017019774.2"/>
</dbReference>
<dbReference type="RefSeq" id="XP_047285249.1">
    <molecule id="Q9HBA0-4"/>
    <property type="nucleotide sequence ID" value="XM_047429293.1"/>
</dbReference>
<dbReference type="RefSeq" id="XP_047285250.1">
    <molecule id="Q9HBA0-2"/>
    <property type="nucleotide sequence ID" value="XM_047429294.1"/>
</dbReference>
<dbReference type="RefSeq" id="XP_047285251.1">
    <molecule id="Q9HBA0-6"/>
    <property type="nucleotide sequence ID" value="XM_047429295.1"/>
</dbReference>
<dbReference type="RefSeq" id="XP_054228775.1">
    <molecule id="Q9HBA0-1"/>
    <property type="nucleotide sequence ID" value="XM_054372800.1"/>
</dbReference>
<dbReference type="RefSeq" id="XP_054228777.1">
    <molecule id="Q9HBA0-4"/>
    <property type="nucleotide sequence ID" value="XM_054372802.1"/>
</dbReference>
<dbReference type="RefSeq" id="XP_054228779.1">
    <molecule id="Q9HBA0-2"/>
    <property type="nucleotide sequence ID" value="XM_054372804.1"/>
</dbReference>
<dbReference type="RefSeq" id="XP_054228781.1">
    <molecule id="Q9HBA0-6"/>
    <property type="nucleotide sequence ID" value="XM_054372806.1"/>
</dbReference>
<dbReference type="PDB" id="4DX1">
    <property type="method" value="X-ray"/>
    <property type="resolution" value="2.85 A"/>
    <property type="chains" value="A/B=149-397"/>
</dbReference>
<dbReference type="PDB" id="4DX2">
    <property type="method" value="X-ray"/>
    <property type="resolution" value="2.95 A"/>
    <property type="chains" value="A/B=149-397"/>
</dbReference>
<dbReference type="PDB" id="7AA5">
    <property type="method" value="EM"/>
    <property type="resolution" value="4.18 A"/>
    <property type="chains" value="A/B/C/D=148-787"/>
</dbReference>
<dbReference type="PDB" id="8FC7">
    <property type="method" value="EM"/>
    <property type="resolution" value="3.30 A"/>
    <property type="chains" value="A/B/C/D=1-871"/>
</dbReference>
<dbReference type="PDB" id="8FC8">
    <property type="method" value="EM"/>
    <property type="resolution" value="3.47 A"/>
    <property type="chains" value="A/B/C/D=1-871"/>
</dbReference>
<dbReference type="PDB" id="8FC9">
    <property type="method" value="EM"/>
    <property type="resolution" value="3.75 A"/>
    <property type="chains" value="A/B/C/D=1-871"/>
</dbReference>
<dbReference type="PDB" id="8FCA">
    <property type="method" value="EM"/>
    <property type="resolution" value="3.41 A"/>
    <property type="chains" value="A/B/C/D=1-871"/>
</dbReference>
<dbReference type="PDB" id="8FCB">
    <property type="method" value="EM"/>
    <property type="resolution" value="3.52 A"/>
    <property type="chains" value="A/B/C/D=1-871"/>
</dbReference>
<dbReference type="PDB" id="8JU5">
    <property type="method" value="EM"/>
    <property type="resolution" value="3.74 A"/>
    <property type="chains" value="A/B/C/D=1-871"/>
</dbReference>
<dbReference type="PDB" id="8JU6">
    <property type="method" value="EM"/>
    <property type="resolution" value="3.45 A"/>
    <property type="chains" value="A/B/C/D=1-871"/>
</dbReference>
<dbReference type="PDB" id="8JVI">
    <property type="method" value="EM"/>
    <property type="resolution" value="3.21 A"/>
    <property type="chains" value="A/B/C/D=1-871"/>
</dbReference>
<dbReference type="PDB" id="8JVJ">
    <property type="method" value="EM"/>
    <property type="resolution" value="3.44 A"/>
    <property type="chains" value="A/B/C/D=1-871"/>
</dbReference>
<dbReference type="PDB" id="8T1B">
    <property type="method" value="EM"/>
    <property type="resolution" value="3.00 A"/>
    <property type="chains" value="A/B/C/D=1-871"/>
</dbReference>
<dbReference type="PDB" id="8T1C">
    <property type="method" value="EM"/>
    <property type="resolution" value="3.49 A"/>
    <property type="chains" value="A=1-871"/>
</dbReference>
<dbReference type="PDB" id="8T1D">
    <property type="method" value="EM"/>
    <property type="resolution" value="3.35 A"/>
    <property type="chains" value="A/B/C/D=1-871"/>
</dbReference>
<dbReference type="PDB" id="8T1E">
    <property type="method" value="EM"/>
    <property type="resolution" value="2.77 A"/>
    <property type="chains" value="A/B/C/D=1-871"/>
</dbReference>
<dbReference type="PDB" id="8T1F">
    <property type="method" value="EM"/>
    <property type="resolution" value="3.49 A"/>
    <property type="chains" value="A/B/C/D=1-871"/>
</dbReference>
<dbReference type="PDBsum" id="4DX1"/>
<dbReference type="PDBsum" id="4DX2"/>
<dbReference type="PDBsum" id="7AA5"/>
<dbReference type="PDBsum" id="8FC7"/>
<dbReference type="PDBsum" id="8FC8"/>
<dbReference type="PDBsum" id="8FC9"/>
<dbReference type="PDBsum" id="8FCA"/>
<dbReference type="PDBsum" id="8FCB"/>
<dbReference type="PDBsum" id="8JU5"/>
<dbReference type="PDBsum" id="8JU6"/>
<dbReference type="PDBsum" id="8JVI"/>
<dbReference type="PDBsum" id="8JVJ"/>
<dbReference type="PDBsum" id="8T1B"/>
<dbReference type="PDBsum" id="8T1C"/>
<dbReference type="PDBsum" id="8T1D"/>
<dbReference type="PDBsum" id="8T1E"/>
<dbReference type="PDBsum" id="8T1F"/>
<dbReference type="EMDB" id="EMD-28975"/>
<dbReference type="EMDB" id="EMD-28976"/>
<dbReference type="EMDB" id="EMD-28977"/>
<dbReference type="EMDB" id="EMD-28978"/>
<dbReference type="EMDB" id="EMD-29331"/>
<dbReference type="EMDB" id="EMD-36659"/>
<dbReference type="EMDB" id="EMD-36660"/>
<dbReference type="EMDB" id="EMD-36675"/>
<dbReference type="EMDB" id="EMD-36676"/>
<dbReference type="SMR" id="Q9HBA0"/>
<dbReference type="BioGRID" id="121883">
    <property type="interactions" value="17"/>
</dbReference>
<dbReference type="CORUM" id="Q9HBA0"/>
<dbReference type="DIP" id="DIP-35702N"/>
<dbReference type="FunCoup" id="Q9HBA0">
    <property type="interactions" value="32"/>
</dbReference>
<dbReference type="IntAct" id="Q9HBA0">
    <property type="interactions" value="8"/>
</dbReference>
<dbReference type="MINT" id="Q9HBA0"/>
<dbReference type="STRING" id="9606.ENSP00000406191"/>
<dbReference type="BindingDB" id="Q9HBA0"/>
<dbReference type="ChEMBL" id="CHEMBL3119"/>
<dbReference type="DrugBank" id="DB11148">
    <property type="generic name" value="Butamben"/>
</dbReference>
<dbReference type="DrugBank" id="DB09061">
    <property type="generic name" value="Cannabidiol"/>
</dbReference>
<dbReference type="DrugBank" id="DB04272">
    <property type="generic name" value="Citric acid"/>
</dbReference>
<dbReference type="DrugBank" id="DB00265">
    <property type="generic name" value="Crotamiton"/>
</dbReference>
<dbReference type="DrugBank" id="DB14009">
    <property type="generic name" value="Medical Cannabis"/>
</dbReference>
<dbReference type="DrugBank" id="DB14011">
    <property type="generic name" value="Nabiximols"/>
</dbReference>
<dbReference type="DrugBank" id="DB17045">
    <property type="generic name" value="Phorbol 12-myristate 13-acetate diester"/>
</dbReference>
<dbReference type="DrugCentral" id="Q9HBA0"/>
<dbReference type="GuidetoPHARMACOLOGY" id="510"/>
<dbReference type="GlyGen" id="Q9HBA0">
    <property type="glycosylation" value="2 sites, 1 N-linked glycan (1 site)"/>
</dbReference>
<dbReference type="iPTMnet" id="Q9HBA0"/>
<dbReference type="PhosphoSitePlus" id="Q9HBA0"/>
<dbReference type="BioMuta" id="TRPV4"/>
<dbReference type="DMDM" id="62901470"/>
<dbReference type="jPOST" id="Q9HBA0"/>
<dbReference type="MassIVE" id="Q9HBA0"/>
<dbReference type="PaxDb" id="9606-ENSP00000406191"/>
<dbReference type="PeptideAtlas" id="Q9HBA0"/>
<dbReference type="ProteomicsDB" id="81511">
    <molecule id="Q9HBA0-1"/>
</dbReference>
<dbReference type="ProteomicsDB" id="81512">
    <molecule id="Q9HBA0-2"/>
</dbReference>
<dbReference type="ProteomicsDB" id="81513">
    <molecule id="Q9HBA0-3"/>
</dbReference>
<dbReference type="ProteomicsDB" id="81514">
    <molecule id="Q9HBA0-4"/>
</dbReference>
<dbReference type="ProteomicsDB" id="81515">
    <molecule id="Q9HBA0-5"/>
</dbReference>
<dbReference type="ProteomicsDB" id="81516">
    <molecule id="Q9HBA0-6"/>
</dbReference>
<dbReference type="Antibodypedia" id="1477">
    <property type="antibodies" value="398 antibodies from 35 providers"/>
</dbReference>
<dbReference type="DNASU" id="59341"/>
<dbReference type="Ensembl" id="ENST00000261740.7">
    <molecule id="Q9HBA0-1"/>
    <property type="protein sequence ID" value="ENSP00000261740.2"/>
    <property type="gene ID" value="ENSG00000111199.12"/>
</dbReference>
<dbReference type="Ensembl" id="ENST00000418703.7">
    <molecule id="Q9HBA0-1"/>
    <property type="protein sequence ID" value="ENSP00000406191.2"/>
    <property type="gene ID" value="ENSG00000111199.12"/>
</dbReference>
<dbReference type="Ensembl" id="ENST00000536838.1">
    <molecule id="Q9HBA0-5"/>
    <property type="protein sequence ID" value="ENSP00000444336.1"/>
    <property type="gene ID" value="ENSG00000111199.12"/>
</dbReference>
<dbReference type="Ensembl" id="ENST00000537083.5">
    <molecule id="Q9HBA0-2"/>
    <property type="protein sequence ID" value="ENSP00000442738.1"/>
    <property type="gene ID" value="ENSG00000111199.12"/>
</dbReference>
<dbReference type="Ensembl" id="ENST00000541794.5">
    <molecule id="Q9HBA0-4"/>
    <property type="protein sequence ID" value="ENSP00000442167.1"/>
    <property type="gene ID" value="ENSG00000111199.12"/>
</dbReference>
<dbReference type="Ensembl" id="ENST00000544971.5">
    <molecule id="Q9HBA0-6"/>
    <property type="protein sequence ID" value="ENSP00000443611.1"/>
    <property type="gene ID" value="ENSG00000111199.12"/>
</dbReference>
<dbReference type="Ensembl" id="ENST00000675670.1">
    <molecule id="Q9HBA0-1"/>
    <property type="protein sequence ID" value="ENSP00000502135.1"/>
    <property type="gene ID" value="ENSG00000111199.12"/>
</dbReference>
<dbReference type="GeneID" id="59341"/>
<dbReference type="KEGG" id="hsa:59341"/>
<dbReference type="MANE-Select" id="ENST00000261740.7">
    <property type="protein sequence ID" value="ENSP00000261740.2"/>
    <property type="RefSeq nucleotide sequence ID" value="NM_021625.5"/>
    <property type="RefSeq protein sequence ID" value="NP_067638.3"/>
</dbReference>
<dbReference type="UCSC" id="uc001tpg.3">
    <molecule id="Q9HBA0-1"/>
    <property type="organism name" value="human"/>
</dbReference>
<dbReference type="AGR" id="HGNC:18083"/>
<dbReference type="CTD" id="59341"/>
<dbReference type="DisGeNET" id="59341"/>
<dbReference type="GeneCards" id="TRPV4"/>
<dbReference type="GeneReviews" id="TRPV4"/>
<dbReference type="HGNC" id="HGNC:18083">
    <property type="gene designation" value="TRPV4"/>
</dbReference>
<dbReference type="HPA" id="ENSG00000111199">
    <property type="expression patterns" value="Tissue enhanced (choroid)"/>
</dbReference>
<dbReference type="MalaCards" id="TRPV4"/>
<dbReference type="MIM" id="113500">
    <property type="type" value="phenotype"/>
</dbReference>
<dbReference type="MIM" id="156530">
    <property type="type" value="phenotype"/>
</dbReference>
<dbReference type="MIM" id="168400">
    <property type="type" value="phenotype"/>
</dbReference>
<dbReference type="MIM" id="181405">
    <property type="type" value="phenotype"/>
</dbReference>
<dbReference type="MIM" id="184095">
    <property type="type" value="phenotype"/>
</dbReference>
<dbReference type="MIM" id="184252">
    <property type="type" value="phenotype"/>
</dbReference>
<dbReference type="MIM" id="600175">
    <property type="type" value="phenotype"/>
</dbReference>
<dbReference type="MIM" id="605427">
    <property type="type" value="gene"/>
</dbReference>
<dbReference type="MIM" id="606071">
    <property type="type" value="phenotype"/>
</dbReference>
<dbReference type="MIM" id="606835">
    <property type="type" value="phenotype"/>
</dbReference>
<dbReference type="MIM" id="613508">
    <property type="type" value="phenotype"/>
</dbReference>
<dbReference type="MIM" id="617383">
    <property type="type" value="phenotype"/>
</dbReference>
<dbReference type="neXtProt" id="NX_Q9HBA0"/>
<dbReference type="OpenTargets" id="ENSG00000111199"/>
<dbReference type="Orphanet" id="93304">
    <property type="disease" value="Autosomal dominant brachyolmia"/>
</dbReference>
<dbReference type="Orphanet" id="99937">
    <property type="disease" value="Autosomal dominant Charcot-Marie-Tooth disease type 2C"/>
</dbReference>
<dbReference type="Orphanet" id="1216">
    <property type="disease" value="Autosomal dominant congenital benign spinal muscular atrophy"/>
</dbReference>
<dbReference type="Orphanet" id="86820">
    <property type="disease" value="Familial avascular necrosis of femoral head"/>
</dbReference>
<dbReference type="Orphanet" id="85169">
    <property type="disease" value="Familial digital arthropathy-brachydactyly"/>
</dbReference>
<dbReference type="Orphanet" id="2635">
    <property type="disease" value="Metatropic dysplasia"/>
</dbReference>
<dbReference type="Orphanet" id="431255">
    <property type="disease" value="Scapuloperoneal spinal muscular atrophy"/>
</dbReference>
<dbReference type="Orphanet" id="263482">
    <property type="disease" value="Spondyloepimetaphyseal dysplasia, Maroteaux type"/>
</dbReference>
<dbReference type="Orphanet" id="93314">
    <property type="disease" value="Spondylometaphyseal dysplasia, Kozlowski type"/>
</dbReference>
<dbReference type="PharmGKB" id="PA38293"/>
<dbReference type="VEuPathDB" id="HostDB:ENSG00000111199"/>
<dbReference type="eggNOG" id="KOG3676">
    <property type="taxonomic scope" value="Eukaryota"/>
</dbReference>
<dbReference type="GeneTree" id="ENSGT00940000158615"/>
<dbReference type="HOGENOM" id="CLU_012795_1_0_1"/>
<dbReference type="InParanoid" id="Q9HBA0"/>
<dbReference type="OMA" id="MIHSALY"/>
<dbReference type="OrthoDB" id="533508at2759"/>
<dbReference type="PAN-GO" id="Q9HBA0">
    <property type="GO annotations" value="6 GO annotations based on evolutionary models"/>
</dbReference>
<dbReference type="PhylomeDB" id="Q9HBA0"/>
<dbReference type="TreeFam" id="TF314711"/>
<dbReference type="PathwayCommons" id="Q9HBA0"/>
<dbReference type="Reactome" id="R-HSA-3295583">
    <property type="pathway name" value="TRP channels"/>
</dbReference>
<dbReference type="Reactome" id="R-HSA-9856530">
    <property type="pathway name" value="High laminar flow shear stress activates signaling by PIEZO1 and PECAM1:CDH5:KDR in endothelial cells"/>
</dbReference>
<dbReference type="SignaLink" id="Q9HBA0"/>
<dbReference type="SIGNOR" id="Q9HBA0"/>
<dbReference type="BioGRID-ORCS" id="59341">
    <property type="hits" value="10 hits in 1151 CRISPR screens"/>
</dbReference>
<dbReference type="ChiTaRS" id="TRPV4">
    <property type="organism name" value="human"/>
</dbReference>
<dbReference type="EvolutionaryTrace" id="Q9HBA0"/>
<dbReference type="GeneWiki" id="TRPV4"/>
<dbReference type="GenomeRNAi" id="59341"/>
<dbReference type="Pharos" id="Q9HBA0">
    <property type="development level" value="Tchem"/>
</dbReference>
<dbReference type="PRO" id="PR:Q9HBA0"/>
<dbReference type="Proteomes" id="UP000005640">
    <property type="component" value="Chromosome 12"/>
</dbReference>
<dbReference type="RNAct" id="Q9HBA0">
    <property type="molecule type" value="protein"/>
</dbReference>
<dbReference type="Bgee" id="ENSG00000111199">
    <property type="expression patterns" value="Expressed in cartilage tissue and 123 other cell types or tissues"/>
</dbReference>
<dbReference type="ExpressionAtlas" id="Q9HBA0">
    <property type="expression patterns" value="baseline and differential"/>
</dbReference>
<dbReference type="GO" id="GO:0005912">
    <property type="term" value="C:adherens junction"/>
    <property type="evidence" value="ECO:0000250"/>
    <property type="project" value="UniProtKB"/>
</dbReference>
<dbReference type="GO" id="GO:0016324">
    <property type="term" value="C:apical plasma membrane"/>
    <property type="evidence" value="ECO:0007669"/>
    <property type="project" value="UniProtKB-SubCell"/>
</dbReference>
<dbReference type="GO" id="GO:0009986">
    <property type="term" value="C:cell surface"/>
    <property type="evidence" value="ECO:0007669"/>
    <property type="project" value="Ensembl"/>
</dbReference>
<dbReference type="GO" id="GO:0005929">
    <property type="term" value="C:cilium"/>
    <property type="evidence" value="ECO:0000318"/>
    <property type="project" value="GO_Central"/>
</dbReference>
<dbReference type="GO" id="GO:0030864">
    <property type="term" value="C:cortical actin cytoskeleton"/>
    <property type="evidence" value="ECO:0000250"/>
    <property type="project" value="BHF-UCL"/>
</dbReference>
<dbReference type="GO" id="GO:0005881">
    <property type="term" value="C:cytoplasmic microtubule"/>
    <property type="evidence" value="ECO:0007669"/>
    <property type="project" value="Ensembl"/>
</dbReference>
<dbReference type="GO" id="GO:0005783">
    <property type="term" value="C:endoplasmic reticulum"/>
    <property type="evidence" value="ECO:0007669"/>
    <property type="project" value="UniProtKB-SubCell"/>
</dbReference>
<dbReference type="GO" id="GO:0030175">
    <property type="term" value="C:filopodium"/>
    <property type="evidence" value="ECO:0000250"/>
    <property type="project" value="BHF-UCL"/>
</dbReference>
<dbReference type="GO" id="GO:0005925">
    <property type="term" value="C:focal adhesion"/>
    <property type="evidence" value="ECO:0000250"/>
    <property type="project" value="BHF-UCL"/>
</dbReference>
<dbReference type="GO" id="GO:0030426">
    <property type="term" value="C:growth cone"/>
    <property type="evidence" value="ECO:0000250"/>
    <property type="project" value="BHF-UCL"/>
</dbReference>
<dbReference type="GO" id="GO:0030027">
    <property type="term" value="C:lamellipodium"/>
    <property type="evidence" value="ECO:0000250"/>
    <property type="project" value="BHF-UCL"/>
</dbReference>
<dbReference type="GO" id="GO:0016020">
    <property type="term" value="C:membrane"/>
    <property type="evidence" value="ECO:0000303"/>
    <property type="project" value="UniProtKB"/>
</dbReference>
<dbReference type="GO" id="GO:0005886">
    <property type="term" value="C:plasma membrane"/>
    <property type="evidence" value="ECO:0000314"/>
    <property type="project" value="UniProtKB"/>
</dbReference>
<dbReference type="GO" id="GO:0032587">
    <property type="term" value="C:ruffle membrane"/>
    <property type="evidence" value="ECO:0000250"/>
    <property type="project" value="BHF-UCL"/>
</dbReference>
<dbReference type="GO" id="GO:0003779">
    <property type="term" value="F:actin binding"/>
    <property type="evidence" value="ECO:0000250"/>
    <property type="project" value="BHF-UCL"/>
</dbReference>
<dbReference type="GO" id="GO:0051015">
    <property type="term" value="F:actin filament binding"/>
    <property type="evidence" value="ECO:0000250"/>
    <property type="project" value="BHF-UCL"/>
</dbReference>
<dbReference type="GO" id="GO:0043014">
    <property type="term" value="F:alpha-tubulin binding"/>
    <property type="evidence" value="ECO:0000250"/>
    <property type="project" value="BHF-UCL"/>
</dbReference>
<dbReference type="GO" id="GO:0005524">
    <property type="term" value="F:ATP binding"/>
    <property type="evidence" value="ECO:0007669"/>
    <property type="project" value="UniProtKB-KW"/>
</dbReference>
<dbReference type="GO" id="GO:0048487">
    <property type="term" value="F:beta-tubulin binding"/>
    <property type="evidence" value="ECO:0000250"/>
    <property type="project" value="BHF-UCL"/>
</dbReference>
<dbReference type="GO" id="GO:0005262">
    <property type="term" value="F:calcium channel activity"/>
    <property type="evidence" value="ECO:0000314"/>
    <property type="project" value="UniProtKB"/>
</dbReference>
<dbReference type="GO" id="GO:0005516">
    <property type="term" value="F:calmodulin binding"/>
    <property type="evidence" value="ECO:0000315"/>
    <property type="project" value="UniProtKB"/>
</dbReference>
<dbReference type="GO" id="GO:0042802">
    <property type="term" value="F:identical protein binding"/>
    <property type="evidence" value="ECO:0000353"/>
    <property type="project" value="IntAct"/>
</dbReference>
<dbReference type="GO" id="GO:0008289">
    <property type="term" value="F:lipid binding"/>
    <property type="evidence" value="ECO:0007669"/>
    <property type="project" value="UniProtKB-KW"/>
</dbReference>
<dbReference type="GO" id="GO:0046872">
    <property type="term" value="F:metal ion binding"/>
    <property type="evidence" value="ECO:0007669"/>
    <property type="project" value="UniProtKB-KW"/>
</dbReference>
<dbReference type="GO" id="GO:0008017">
    <property type="term" value="F:microtubule binding"/>
    <property type="evidence" value="ECO:0000250"/>
    <property type="project" value="BHF-UCL"/>
</dbReference>
<dbReference type="GO" id="GO:0005261">
    <property type="term" value="F:monoatomic cation channel activity"/>
    <property type="evidence" value="ECO:0000314"/>
    <property type="project" value="UniProtKB"/>
</dbReference>
<dbReference type="GO" id="GO:0005034">
    <property type="term" value="F:osmosensor activity"/>
    <property type="evidence" value="ECO:0007669"/>
    <property type="project" value="Ensembl"/>
</dbReference>
<dbReference type="GO" id="GO:0019901">
    <property type="term" value="F:protein kinase binding"/>
    <property type="evidence" value="ECO:0000353"/>
    <property type="project" value="BHF-UCL"/>
</dbReference>
<dbReference type="GO" id="GO:0005080">
    <property type="term" value="F:protein kinase C binding"/>
    <property type="evidence" value="ECO:0000250"/>
    <property type="project" value="BHF-UCL"/>
</dbReference>
<dbReference type="GO" id="GO:0042169">
    <property type="term" value="F:SH2 domain binding"/>
    <property type="evidence" value="ECO:0000250"/>
    <property type="project" value="BHF-UCL"/>
</dbReference>
<dbReference type="GO" id="GO:0015275">
    <property type="term" value="F:stretch-activated, monoatomic cation-selective, calcium channel activity"/>
    <property type="evidence" value="ECO:0000315"/>
    <property type="project" value="UniProtKB"/>
</dbReference>
<dbReference type="GO" id="GO:0030036">
    <property type="term" value="P:actin cytoskeleton organization"/>
    <property type="evidence" value="ECO:0000250"/>
    <property type="project" value="BHF-UCL"/>
</dbReference>
<dbReference type="GO" id="GO:0007015">
    <property type="term" value="P:actin filament organization"/>
    <property type="evidence" value="ECO:0000250"/>
    <property type="project" value="BHF-UCL"/>
</dbReference>
<dbReference type="GO" id="GO:0097497">
    <property type="term" value="P:blood vessel endothelial cell delamination"/>
    <property type="evidence" value="ECO:0000315"/>
    <property type="project" value="UniProtKB"/>
</dbReference>
<dbReference type="GO" id="GO:0070509">
    <property type="term" value="P:calcium ion import"/>
    <property type="evidence" value="ECO:0000250"/>
    <property type="project" value="BHF-UCL"/>
</dbReference>
<dbReference type="GO" id="GO:0098703">
    <property type="term" value="P:calcium ion import across plasma membrane"/>
    <property type="evidence" value="ECO:0000318"/>
    <property type="project" value="GO_Central"/>
</dbReference>
<dbReference type="GO" id="GO:1902656">
    <property type="term" value="P:calcium ion import into cytosol"/>
    <property type="evidence" value="ECO:0000314"/>
    <property type="project" value="UniProtKB"/>
</dbReference>
<dbReference type="GO" id="GO:0070588">
    <property type="term" value="P:calcium ion transmembrane transport"/>
    <property type="evidence" value="ECO:0000315"/>
    <property type="project" value="UniProtKB"/>
</dbReference>
<dbReference type="GO" id="GO:0006816">
    <property type="term" value="P:calcium ion transport"/>
    <property type="evidence" value="ECO:0000314"/>
    <property type="project" value="UniProtKB"/>
</dbReference>
<dbReference type="GO" id="GO:0060351">
    <property type="term" value="P:cartilage development involved in endochondral bone morphogenesis"/>
    <property type="evidence" value="ECO:0000315"/>
    <property type="project" value="UniProtKB"/>
</dbReference>
<dbReference type="GO" id="GO:0006884">
    <property type="term" value="P:cell volume homeostasis"/>
    <property type="evidence" value="ECO:0000304"/>
    <property type="project" value="UniProtKB"/>
</dbReference>
<dbReference type="GO" id="GO:0007043">
    <property type="term" value="P:cell-cell junction assembly"/>
    <property type="evidence" value="ECO:0000250"/>
    <property type="project" value="UniProtKB"/>
</dbReference>
<dbReference type="GO" id="GO:0071476">
    <property type="term" value="P:cellular hypotonic response"/>
    <property type="evidence" value="ECO:0000315"/>
    <property type="project" value="UniProtKB"/>
</dbReference>
<dbReference type="GO" id="GO:0071477">
    <property type="term" value="P:cellular hypotonic salinity response"/>
    <property type="evidence" value="ECO:0007669"/>
    <property type="project" value="Ensembl"/>
</dbReference>
<dbReference type="GO" id="GO:0034605">
    <property type="term" value="P:cellular response to heat"/>
    <property type="evidence" value="ECO:0000250"/>
    <property type="project" value="UniProtKB"/>
</dbReference>
<dbReference type="GO" id="GO:0071470">
    <property type="term" value="P:cellular response to osmotic stress"/>
    <property type="evidence" value="ECO:0000250"/>
    <property type="project" value="UniProtKB"/>
</dbReference>
<dbReference type="GO" id="GO:0043622">
    <property type="term" value="P:cortical microtubule organization"/>
    <property type="evidence" value="ECO:0000250"/>
    <property type="project" value="BHF-UCL"/>
</dbReference>
<dbReference type="GO" id="GO:0002024">
    <property type="term" value="P:diet induced thermogenesis"/>
    <property type="evidence" value="ECO:0007669"/>
    <property type="project" value="Ensembl"/>
</dbReference>
<dbReference type="GO" id="GO:0042593">
    <property type="term" value="P:glucose homeostasis"/>
    <property type="evidence" value="ECO:0007669"/>
    <property type="project" value="Ensembl"/>
</dbReference>
<dbReference type="GO" id="GO:0042538">
    <property type="term" value="P:hyperosmotic salinity response"/>
    <property type="evidence" value="ECO:0007669"/>
    <property type="project" value="Ensembl"/>
</dbReference>
<dbReference type="GO" id="GO:0006874">
    <property type="term" value="P:intracellular calcium ion homeostasis"/>
    <property type="evidence" value="ECO:0000314"/>
    <property type="project" value="UniProtKB"/>
</dbReference>
<dbReference type="GO" id="GO:0046785">
    <property type="term" value="P:microtubule polymerization"/>
    <property type="evidence" value="ECO:0000250"/>
    <property type="project" value="BHF-UCL"/>
</dbReference>
<dbReference type="GO" id="GO:0050891">
    <property type="term" value="P:multicellular organismal-level water homeostasis"/>
    <property type="evidence" value="ECO:0000315"/>
    <property type="project" value="UniProtKB"/>
</dbReference>
<dbReference type="GO" id="GO:1903444">
    <property type="term" value="P:negative regulation of brown fat cell differentiation"/>
    <property type="evidence" value="ECO:0007669"/>
    <property type="project" value="Ensembl"/>
</dbReference>
<dbReference type="GO" id="GO:0010977">
    <property type="term" value="P:negative regulation of neuron projection development"/>
    <property type="evidence" value="ECO:0000250"/>
    <property type="project" value="BHF-UCL"/>
</dbReference>
<dbReference type="GO" id="GO:0000122">
    <property type="term" value="P:negative regulation of transcription by RNA polymerase II"/>
    <property type="evidence" value="ECO:0007669"/>
    <property type="project" value="Ensembl"/>
</dbReference>
<dbReference type="GO" id="GO:0007231">
    <property type="term" value="P:osmosensory signaling pathway"/>
    <property type="evidence" value="ECO:0000250"/>
    <property type="project" value="BHF-UCL"/>
</dbReference>
<dbReference type="GO" id="GO:0071651">
    <property type="term" value="P:positive regulation of chemokine (C-C motif) ligand 5 production"/>
    <property type="evidence" value="ECO:0007669"/>
    <property type="project" value="Ensembl"/>
</dbReference>
<dbReference type="GO" id="GO:2000340">
    <property type="term" value="P:positive regulation of chemokine (C-X-C motif) ligand 1 production"/>
    <property type="evidence" value="ECO:0007669"/>
    <property type="project" value="Ensembl"/>
</dbReference>
<dbReference type="GO" id="GO:0007204">
    <property type="term" value="P:positive regulation of cytosolic calcium ion concentration"/>
    <property type="evidence" value="ECO:0000314"/>
    <property type="project" value="UniProtKB"/>
</dbReference>
<dbReference type="GO" id="GO:0070374">
    <property type="term" value="P:positive regulation of ERK1 and ERK2 cascade"/>
    <property type="evidence" value="ECO:0007669"/>
    <property type="project" value="Ensembl"/>
</dbReference>
<dbReference type="GO" id="GO:0050729">
    <property type="term" value="P:positive regulation of inflammatory response"/>
    <property type="evidence" value="ECO:0007669"/>
    <property type="project" value="Ensembl"/>
</dbReference>
<dbReference type="GO" id="GO:0032755">
    <property type="term" value="P:positive regulation of interleukin-6 production"/>
    <property type="evidence" value="ECO:0007669"/>
    <property type="project" value="Ensembl"/>
</dbReference>
<dbReference type="GO" id="GO:0046330">
    <property type="term" value="P:positive regulation of JNK cascade"/>
    <property type="evidence" value="ECO:0007669"/>
    <property type="project" value="Ensembl"/>
</dbReference>
<dbReference type="GO" id="GO:0010759">
    <property type="term" value="P:positive regulation of macrophage chemotaxis"/>
    <property type="evidence" value="ECO:0007669"/>
    <property type="project" value="Ensembl"/>
</dbReference>
<dbReference type="GO" id="GO:0071642">
    <property type="term" value="P:positive regulation of macrophage inflammatory protein 1 alpha production"/>
    <property type="evidence" value="ECO:0007669"/>
    <property type="project" value="Ensembl"/>
</dbReference>
<dbReference type="GO" id="GO:0031117">
    <property type="term" value="P:positive regulation of microtubule depolymerization"/>
    <property type="evidence" value="ECO:0000250"/>
    <property type="project" value="BHF-UCL"/>
</dbReference>
<dbReference type="GO" id="GO:0071639">
    <property type="term" value="P:positive regulation of monocyte chemotactic protein-1 production"/>
    <property type="evidence" value="ECO:0007669"/>
    <property type="project" value="Ensembl"/>
</dbReference>
<dbReference type="GO" id="GO:0045989">
    <property type="term" value="P:positive regulation of striated muscle contraction"/>
    <property type="evidence" value="ECO:0007669"/>
    <property type="project" value="Ensembl"/>
</dbReference>
<dbReference type="GO" id="GO:0043117">
    <property type="term" value="P:positive regulation of vascular permeability"/>
    <property type="evidence" value="ECO:0000315"/>
    <property type="project" value="UniProtKB"/>
</dbReference>
<dbReference type="GO" id="GO:1903715">
    <property type="term" value="P:regulation of aerobic respiration"/>
    <property type="evidence" value="ECO:0007669"/>
    <property type="project" value="Ensembl"/>
</dbReference>
<dbReference type="GO" id="GO:0047484">
    <property type="term" value="P:regulation of response to osmotic stress"/>
    <property type="evidence" value="ECO:0007669"/>
    <property type="project" value="Ensembl"/>
</dbReference>
<dbReference type="GO" id="GO:0001666">
    <property type="term" value="P:response to hypoxia"/>
    <property type="evidence" value="ECO:0007669"/>
    <property type="project" value="Ensembl"/>
</dbReference>
<dbReference type="GO" id="GO:0032868">
    <property type="term" value="P:response to insulin"/>
    <property type="evidence" value="ECO:0007669"/>
    <property type="project" value="Ensembl"/>
</dbReference>
<dbReference type="GO" id="GO:0009612">
    <property type="term" value="P:response to mechanical stimulus"/>
    <property type="evidence" value="ECO:0000304"/>
    <property type="project" value="UniProtKB"/>
</dbReference>
<dbReference type="GO" id="GO:0030103">
    <property type="term" value="P:vasopressin secretion"/>
    <property type="evidence" value="ECO:0007669"/>
    <property type="project" value="Ensembl"/>
</dbReference>
<dbReference type="CDD" id="cd22195">
    <property type="entry name" value="TRPV4"/>
    <property type="match status" value="1"/>
</dbReference>
<dbReference type="FunFam" id="1.10.287.70:FF:000074">
    <property type="entry name" value="Transient receptor potential cation channel subfamily V member 1"/>
    <property type="match status" value="1"/>
</dbReference>
<dbReference type="FunFam" id="1.25.40.20:FF:000018">
    <property type="entry name" value="Transient receptor potential cation channel subfamily V member 1"/>
    <property type="match status" value="1"/>
</dbReference>
<dbReference type="Gene3D" id="1.10.287.70">
    <property type="match status" value="1"/>
</dbReference>
<dbReference type="Gene3D" id="1.25.40.20">
    <property type="entry name" value="Ankyrin repeat-containing domain"/>
    <property type="match status" value="1"/>
</dbReference>
<dbReference type="InterPro" id="IPR002110">
    <property type="entry name" value="Ankyrin_rpt"/>
</dbReference>
<dbReference type="InterPro" id="IPR036770">
    <property type="entry name" value="Ankyrin_rpt-contain_sf"/>
</dbReference>
<dbReference type="InterPro" id="IPR005821">
    <property type="entry name" value="Ion_trans_dom"/>
</dbReference>
<dbReference type="InterPro" id="IPR024862">
    <property type="entry name" value="TRPV"/>
</dbReference>
<dbReference type="InterPro" id="IPR008347">
    <property type="entry name" value="TrpV1-4"/>
</dbReference>
<dbReference type="InterPro" id="IPR008348">
    <property type="entry name" value="TrpV4"/>
</dbReference>
<dbReference type="NCBIfam" id="TIGR00870">
    <property type="entry name" value="trp"/>
    <property type="match status" value="1"/>
</dbReference>
<dbReference type="PANTHER" id="PTHR10582:SF4">
    <property type="entry name" value="TRANSIENT RECEPTOR POTENTIAL CATION CHANNEL SUBFAMILY V MEMBER 4"/>
    <property type="match status" value="1"/>
</dbReference>
<dbReference type="PANTHER" id="PTHR10582">
    <property type="entry name" value="TRANSIENT RECEPTOR POTENTIAL ION CHANNEL PROTEIN"/>
    <property type="match status" value="1"/>
</dbReference>
<dbReference type="Pfam" id="PF00023">
    <property type="entry name" value="Ank"/>
    <property type="match status" value="1"/>
</dbReference>
<dbReference type="Pfam" id="PF00520">
    <property type="entry name" value="Ion_trans"/>
    <property type="match status" value="1"/>
</dbReference>
<dbReference type="PRINTS" id="PR01768">
    <property type="entry name" value="TRPVRECEPTOR"/>
</dbReference>
<dbReference type="PRINTS" id="PR01769">
    <property type="entry name" value="VRL2RECEPTOR"/>
</dbReference>
<dbReference type="SMART" id="SM00248">
    <property type="entry name" value="ANK"/>
    <property type="match status" value="3"/>
</dbReference>
<dbReference type="SUPFAM" id="SSF48403">
    <property type="entry name" value="Ankyrin repeat"/>
    <property type="match status" value="1"/>
</dbReference>
<dbReference type="PROSITE" id="PS50297">
    <property type="entry name" value="ANK_REP_REGION"/>
    <property type="match status" value="1"/>
</dbReference>
<dbReference type="PROSITE" id="PS50088">
    <property type="entry name" value="ANK_REPEAT"/>
    <property type="match status" value="1"/>
</dbReference>
<proteinExistence type="evidence at protein level"/>
<feature type="chain" id="PRO_0000215347" description="Transient receptor potential cation channel subfamily V member 4">
    <location>
        <begin position="1"/>
        <end position="871"/>
    </location>
</feature>
<feature type="topological domain" description="Cytoplasmic" evidence="2">
    <location>
        <begin position="1"/>
        <end position="469"/>
    </location>
</feature>
<feature type="transmembrane region" description="Helical" evidence="2">
    <location>
        <begin position="470"/>
        <end position="490"/>
    </location>
</feature>
<feature type="topological domain" description="Extracellular" evidence="2">
    <location>
        <begin position="491"/>
        <end position="507"/>
    </location>
</feature>
<feature type="transmembrane region" description="Helical" evidence="2">
    <location>
        <begin position="508"/>
        <end position="534"/>
    </location>
</feature>
<feature type="topological domain" description="Cytoplasmic" evidence="2">
    <location>
        <begin position="535"/>
        <end position="547"/>
    </location>
</feature>
<feature type="transmembrane region" description="Helical" evidence="2">
    <location>
        <begin position="548"/>
        <end position="568"/>
    </location>
</feature>
<feature type="topological domain" description="Extracellular" evidence="2">
    <location>
        <begin position="569"/>
        <end position="572"/>
    </location>
</feature>
<feature type="transmembrane region" description="Helical" evidence="2">
    <location>
        <begin position="573"/>
        <end position="593"/>
    </location>
</feature>
<feature type="topological domain" description="Cytoplasmic" evidence="2">
    <location>
        <begin position="594"/>
        <end position="608"/>
    </location>
</feature>
<feature type="transmembrane region" description="Helical" evidence="2">
    <location>
        <begin position="609"/>
        <end position="636"/>
    </location>
</feature>
<feature type="topological domain" description="Extracellular" evidence="2">
    <location>
        <begin position="637"/>
        <end position="665"/>
    </location>
</feature>
<feature type="intramembrane region" description="Pore-forming" evidence="2">
    <location>
        <begin position="666"/>
        <end position="685"/>
    </location>
</feature>
<feature type="topological domain" description="Extracellular" evidence="2">
    <location>
        <begin position="686"/>
        <end position="693"/>
    </location>
</feature>
<feature type="transmembrane region" description="Helical" evidence="2">
    <location>
        <begin position="694"/>
        <end position="722"/>
    </location>
</feature>
<feature type="topological domain" description="Cytoplasmic" evidence="2">
    <location>
        <begin position="723"/>
        <end position="871"/>
    </location>
</feature>
<feature type="repeat" description="ANK 1">
    <location>
        <begin position="237"/>
        <end position="266"/>
    </location>
</feature>
<feature type="repeat" description="ANK 2">
    <location>
        <begin position="284"/>
        <end position="313"/>
    </location>
</feature>
<feature type="repeat" description="ANK 3">
    <location>
        <begin position="369"/>
        <end position="398"/>
    </location>
</feature>
<feature type="region of interest" description="Disordered" evidence="5">
    <location>
        <begin position="1"/>
        <end position="68"/>
    </location>
</feature>
<feature type="region of interest" description="Interaction with calmodulin and ITPR3" evidence="7 12">
    <location>
        <begin position="812"/>
        <end position="831"/>
    </location>
</feature>
<feature type="region of interest" description="Disordered" evidence="5">
    <location>
        <begin position="849"/>
        <end position="871"/>
    </location>
</feature>
<feature type="short sequence motif" description="Selectivity filter" evidence="2">
    <location>
        <begin position="679"/>
        <end position="682"/>
    </location>
</feature>
<feature type="binding site" evidence="26 39">
    <location>
        <position position="192"/>
    </location>
    <ligand>
        <name>ATP</name>
        <dbReference type="ChEBI" id="CHEBI:30616"/>
    </ligand>
</feature>
<feature type="binding site" evidence="26 39">
    <location>
        <position position="197"/>
    </location>
    <ligand>
        <name>ATP</name>
        <dbReference type="ChEBI" id="CHEBI:30616"/>
    </ligand>
</feature>
<feature type="binding site" evidence="26 39">
    <location>
        <position position="201"/>
    </location>
    <ligand>
        <name>ATP</name>
        <dbReference type="ChEBI" id="CHEBI:30616"/>
    </ligand>
</feature>
<feature type="binding site" evidence="26 39">
    <location>
        <begin position="236"/>
        <end position="239"/>
    </location>
    <ligand>
        <name>ATP</name>
        <dbReference type="ChEBI" id="CHEBI:30616"/>
    </ligand>
</feature>
<feature type="binding site" evidence="26 39">
    <location>
        <position position="248"/>
    </location>
    <ligand>
        <name>ATP</name>
        <dbReference type="ChEBI" id="CHEBI:30616"/>
    </ligand>
</feature>
<feature type="binding site" evidence="1">
    <location>
        <begin position="249"/>
        <end position="251"/>
    </location>
    <ligand>
        <name>a 1,2-diacyl-sn-glycero-3-phospho-(1D-myo-inositol-4,5-bisphosphate)</name>
        <dbReference type="ChEBI" id="CHEBI:58456"/>
    </ligand>
</feature>
<feature type="binding site" evidence="1">
    <location>
        <begin position="296"/>
        <end position="299"/>
    </location>
    <ligand>
        <name>a 1,2-diacyl-sn-glycero-3-phospho-(1D-myo-inositol-4,5-bisphosphate)</name>
        <dbReference type="ChEBI" id="CHEBI:58456"/>
    </ligand>
</feature>
<feature type="binding site" evidence="1">
    <location>
        <position position="344"/>
    </location>
    <ligand>
        <name>a 1,2-diacyl-sn-glycero-3-phospho-(1D-myo-inositol-4,5-bisphosphate)</name>
        <dbReference type="ChEBI" id="CHEBI:58456"/>
    </ligand>
</feature>
<feature type="binding site" evidence="4">
    <location>
        <position position="682"/>
    </location>
    <ligand>
        <name>Ca(2+)</name>
        <dbReference type="ChEBI" id="CHEBI:29108"/>
        <note>ligand shared between two neighboring subunits</note>
    </ligand>
</feature>
<feature type="modified residue" description="Phosphotyrosine" evidence="3">
    <location>
        <position position="110"/>
    </location>
</feature>
<feature type="modified residue" description="Phosphotyrosine" evidence="3">
    <location>
        <position position="253"/>
    </location>
</feature>
<feature type="modified residue" description="Phosphotyrosine" evidence="3">
    <location>
        <position position="805"/>
    </location>
</feature>
<feature type="modified residue" description="Phosphoserine" evidence="3">
    <location>
        <position position="824"/>
    </location>
</feature>
<feature type="splice variant" id="VSP_026614" description="In isoform 5." evidence="36">
    <location>
        <begin position="28"/>
        <end position="61"/>
    </location>
</feature>
<feature type="splice variant" id="VSP_026615" description="In isoform 4 and isoform 6." evidence="36">
    <location>
        <begin position="239"/>
        <end position="285"/>
    </location>
</feature>
<feature type="splice variant" id="VSP_013436" description="In isoform 2 and isoform 6." evidence="36 37">
    <location>
        <begin position="385"/>
        <end position="444"/>
    </location>
</feature>
<feature type="splice variant" id="VSP_013437" description="In isoform 3." evidence="35">
    <original>PLDSMGNPRCDGHQQGYPRKWRTDDAPL</original>
    <variation>RHLCRVRRKR</variation>
    <location>
        <begin position="844"/>
        <end position="871"/>
    </location>
</feature>
<feature type="sequence variant" id="VAR_052391" description="Associated with lower sodium concentrations in serum; shows diminished response to hypotonic stress relative to wild-type; dbSNP:rs3742030.">
    <original>P</original>
    <variation>S</variation>
    <location>
        <position position="19"/>
    </location>
</feature>
<feature type="sequence variant" id="VAR_064517" description="In MTD; lethal form; dbSNP:rs397514473." evidence="18">
    <original>T</original>
    <variation>I</variation>
    <location>
        <position position="89"/>
    </location>
</feature>
<feature type="sequence variant" id="VAR_067989" description="In HMND8; decreased calcium channel activity; dbSNP:rs876661124." evidence="25">
    <original>P</original>
    <variation>R</variation>
    <location>
        <position position="97"/>
    </location>
</feature>
<feature type="sequence variant" id="VAR_064518" description="Found in a patient with spondyloepiphyseal dysplasia Maroteaux type; decreased protein stability; increased ATP-binding; dbSNP:rs387906324." evidence="19 26">
    <original>E</original>
    <variation>K</variation>
    <location>
        <position position="183"/>
    </location>
</feature>
<feature type="sequence variant" id="VAR_064519" description="In MTD; lethal form; decreased protein stability; reduced ATP-binding; dbSNP:rs387906903." evidence="18 26">
    <original>K</original>
    <variation>R</variation>
    <location>
        <position position="197"/>
    </location>
</feature>
<feature type="sequence variant" id="VAR_064520" description="In MTD; decreased protein stability; dbSNP:rs515726167." evidence="20 26">
    <original>L</original>
    <variation>F</variation>
    <location>
        <position position="199"/>
    </location>
</feature>
<feature type="sequence variant" id="VAR_067990" description="In HMND8 and CMT2C; does not affect channel localization to plasma membrane; results in increased agonist-induced channel activity and increased basal intracellular calcium concentration; decreases ATP-binding; no effect on protein stability; decreases binding to membranes enriched in phosphatidylinositol-2,4-bisphosphate; causes increased cell death; dbSNP:rs387906904." evidence="22 25 26 28">
    <original>R</original>
    <variation>C</variation>
    <location>
        <position position="232"/>
    </location>
</feature>
<feature type="sequence variant" id="VAR_063528" description="In CMT2C; increased agonist-induced channel activity; causes increased cell death; no effect on protein stability and ATP-binding; dbSNP:rs267607146." evidence="15 22 26">
    <original>R</original>
    <variation>C</variation>
    <location>
        <position position="269"/>
    </location>
</feature>
<feature type="sequence variant" id="VAR_063529" description="In HMND8 and CMT2C; increased agonist-induced channel activity and increased basal intracellular calcium concentration; slightly decreased protein stability and ATP-binding; decreases binding to membranes enriched in phosphatidylinositol-2,4-bisphosphate; causes increased cell death; dbSNP:rs267607144." evidence="15 16 17 22 26 28">
    <original>R</original>
    <variation>H</variation>
    <location>
        <position position="269"/>
    </location>
</feature>
<feature type="sequence variant" id="VAR_068498" description="In FDAB; poorly expressed on the cell surface; mutant channels show a significantly reduced response to agonists; dbSNP:rs387907220." evidence="23">
    <original>G</original>
    <variation>V</variation>
    <location>
        <position position="270"/>
    </location>
</feature>
<feature type="sequence variant" id="VAR_068499" description="In FDAB; poorly expressed on the cell surface; mutant channels show a significantly reduced response to agonists; dbSNP:rs387907219." evidence="23">
    <original>R</original>
    <variation>P</variation>
    <location>
        <position position="271"/>
    </location>
</feature>
<feature type="sequence variant" id="VAR_068500" description="In FDAB; poorly expressed on the cell surface; mutant channels show a significantly reduced response to agonists; dbSNP:rs515726170." evidence="23">
    <original>F</original>
    <variation>L</variation>
    <location>
        <position position="273"/>
    </location>
</feature>
<feature type="sequence variant" id="VAR_064521" description="In SMDK; slightly increased ATP-binding; slightly decreased protein stability; dbSNP:rs267607148." evidence="20 26">
    <original>E</original>
    <variation>K</variation>
    <location>
        <position position="278"/>
    </location>
</feature>
<feature type="sequence variant" id="VAR_064522" description="In MTD; impairs protein folding or stability; dbSNP:rs515726171." evidence="20 26">
    <original>T</original>
    <variation>A</variation>
    <location>
        <position position="295"/>
    </location>
</feature>
<feature type="sequence variant" id="VAR_063541" description="In CMT2C; increased basal and agonist-induced channel activity, decreased protein stability; decreased ATP-binding; decreases binding to membranes enriched in phosphatidylinositol-2,4-bisphosphate; causes increased cell death; dbSNP:rs267607143." evidence="17 21 26 28">
    <original>R</original>
    <variation>W</variation>
    <location>
        <position position="315"/>
    </location>
</feature>
<feature type="sequence variant" id="VAR_063530" description="In CMT2C and SPSMA; decreased protein stability; decreased ATP-binding; dbSNP:rs267607145." evidence="16 17">
    <original>R</original>
    <variation>C</variation>
    <location>
        <position position="316"/>
    </location>
</feature>
<feature type="sequence variant" id="VAR_067991" description="In CMT2C; does not affect channel localization to plasma membrane; results in increased agonist-induced channel activity and increased basal intracellular calcium concentration; decreases protein stability; causes increased cell death; dbSNP:rs387906905." evidence="22 28">
    <original>R</original>
    <variation>H</variation>
    <location>
        <position position="316"/>
    </location>
</feature>
<feature type="sequence variant" id="VAR_062331" description="In MTD; decreased protein stability; no effect on ATP-binding; dbSNP:rs121912636." evidence="13 18 26">
    <original>I</original>
    <variation>F</variation>
    <location>
        <position position="331"/>
    </location>
</feature>
<feature type="sequence variant" id="VAR_064523" description="In MTD; no effect on protein stability; no effect on ATP-binding; dbSNP:rs515726172." evidence="20 26">
    <original>I</original>
    <variation>T</variation>
    <location>
        <position position="331"/>
    </location>
</feature>
<feature type="sequence variant" id="VAR_067992" description="In SMDK.">
    <location>
        <begin position="333"/>
        <end position="336"/>
    </location>
</feature>
<feature type="sequence variant" id="VAR_062332" description="In SMDK; decreased protein stability; no effect on ATP-binding; dbSNP:rs121912634." evidence="13 26">
    <original>D</original>
    <variation>G</variation>
    <location>
        <position position="333"/>
    </location>
</feature>
<feature type="sequence variant" id="VAR_064524" description="In MTD; decreased protein stability; decreased ATP-binding; dbSNP:rs515726152." evidence="20 26">
    <original>V</original>
    <variation>F</variation>
    <location>
        <position position="342"/>
    </location>
</feature>
<feature type="sequence variant" id="VAR_064525" description="In MTD; lethal form." evidence="18 20">
    <location>
        <position position="471"/>
    </location>
</feature>
<feature type="sequence variant" id="VAR_067993" description="In CMT2C; dbSNP:rs387906902." evidence="21">
    <original>S</original>
    <variation>Y</variation>
    <location>
        <position position="542"/>
    </location>
</feature>
<feature type="sequence variant" id="VAR_064526" description="In MTD; dbSNP:rs515726158." evidence="20">
    <original>F</original>
    <variation>L</variation>
    <location>
        <position position="592"/>
    </location>
</feature>
<feature type="sequence variant" id="VAR_062333" description="In SMDK and PSTD; dbSNP:rs77975504." evidence="13 19 20">
    <original>R</original>
    <variation>H</variation>
    <location>
        <position position="594"/>
    </location>
</feature>
<feature type="sequence variant" id="VAR_064527" description="In SMDK; dbSNP:rs515726159." evidence="20">
    <original>L</original>
    <variation>P</variation>
    <location>
        <position position="596"/>
    </location>
</feature>
<feature type="sequence variant" id="VAR_064528" description="In SMDK; dbSNP:rs515726160." evidence="20">
    <original>G</original>
    <variation>W</variation>
    <location>
        <position position="600"/>
    </location>
</feature>
<feature type="sequence variant" id="VAR_064529" description="Found in a patient with spondyloepiphyseal dysplasia Maroteaux type; dbSNP:rs267607150." evidence="19">
    <original>Y</original>
    <variation>C</variation>
    <location>
        <position position="602"/>
    </location>
</feature>
<feature type="sequence variant" id="VAR_064530" description="In MTD; lethal form; dbSNP:rs515726161." evidence="18">
    <original>I</original>
    <variation>M</variation>
    <location>
        <position position="604"/>
    </location>
</feature>
<feature type="sequence variant" id="VAR_054805" description="In BCYM3; results in a gain of function and a constitutive activation of the channel; dbSNP:rs121912632." evidence="10">
    <original>R</original>
    <variation>Q</variation>
    <location>
        <position position="616"/>
    </location>
</feature>
<feature type="sequence variant" id="VAR_064531" description="In MTD; dbSNP:rs515726162." evidence="18">
    <original>F</original>
    <variation>L</variation>
    <location>
        <position position="617"/>
    </location>
</feature>
<feature type="sequence variant" id="VAR_064532" description="In MTD; dbSNP:rs515726163." evidence="18 32">
    <original>L</original>
    <variation>P</variation>
    <location>
        <position position="618"/>
    </location>
</feature>
<feature type="sequence variant" id="VAR_054806" description="In BCYM3; results in a gain of function and a constitutive activation of the channel; dbSNP:rs121912633." evidence="10">
    <original>V</original>
    <variation>I</variation>
    <location>
        <position position="620"/>
    </location>
</feature>
<feature type="sequence variant" id="VAR_064533" description="In SMDK; dbSNP:rs515726164." evidence="20">
    <original>M</original>
    <variation>I</variation>
    <location>
        <position position="625"/>
    </location>
</feature>
<feature type="sequence variant" id="VAR_064534" description="In SMDK; dbSNP:rs116571438." evidence="20">
    <original>L</original>
    <variation>M</variation>
    <location>
        <position position="709"/>
    </location>
</feature>
<feature type="sequence variant" id="VAR_062334" description="In SMDK; dbSNP:rs121912635." evidence="13">
    <original>A</original>
    <variation>S</variation>
    <location>
        <position position="716"/>
    </location>
</feature>
<feature type="sequence variant" id="VAR_064535" description="In MTD." evidence="20">
    <original>R</original>
    <variation>K</variation>
    <location>
        <position position="775"/>
    </location>
</feature>
<feature type="sequence variant" id="VAR_064536" description="In SMDK; dbSNP:rs515726165." evidence="20">
    <original>C</original>
    <variation>Y</variation>
    <location>
        <position position="777"/>
    </location>
</feature>
<feature type="sequence variant" id="VAR_064537" description="In MTD and SMDK; also found in a patient with spondyloepiphyseal dysplasia Maroteaux type; dbSNP:rs267607149." evidence="18 19 20">
    <original>E</original>
    <variation>K</variation>
    <location>
        <position position="797"/>
    </location>
</feature>
<feature type="sequence variant" id="VAR_064538" description="In MTD; dbSNP:rs267607147." evidence="20">
    <original>P</original>
    <variation>A</variation>
    <location>
        <position position="799"/>
    </location>
</feature>
<feature type="sequence variant" id="VAR_062335" description="In MTD; also found in a patient with spondyloepiphyseal dysplasia Maroteaux type; dbSNP:rs121912637." evidence="13 18 19 20 29">
    <original>P</original>
    <variation>L</variation>
    <location>
        <position position="799"/>
    </location>
</feature>
<feature type="sequence variant" id="VAR_064539" description="In MTD; dbSNP:rs121912637." evidence="20">
    <original>P</original>
    <variation>R</variation>
    <location>
        <position position="799"/>
    </location>
</feature>
<feature type="sequence variant" id="VAR_064540" description="In MTD; dbSNP:rs267607147." evidence="20">
    <original>P</original>
    <variation>S</variation>
    <location>
        <position position="799"/>
    </location>
</feature>
<feature type="mutagenesis site" description="Decreased ATP-binding." evidence="26">
    <original>F</original>
    <variation>C</variation>
    <location>
        <position position="231"/>
    </location>
</feature>
<feature type="mutagenesis site" description="No effect on channel activity. No effect on interaction with membranes enriched in phosphatidylinositol-2,4-bisphosphate." evidence="28">
    <original>K</original>
    <variation>E</variation>
    <location>
        <position position="251"/>
    </location>
</feature>
<feature type="mutagenesis site" description="Loss of interaction with membranes enriched in phosphatidylinositol-2,4-bisphosphate; when associated with P-299." evidence="28">
    <original>N</original>
    <variation>D</variation>
    <location>
        <position position="296"/>
    </location>
</feature>
<feature type="mutagenesis site" description="Strongly decreased interaction with membranes enriched in phosphatidylinositol-2,4-bisphosphate. Loss of interaction with membranes enriched in phosphatidylinositol-2,4-bisphosphate; when associated with D-296." evidence="28">
    <original>H</original>
    <variation>P</variation>
    <location>
        <position position="299"/>
    </location>
</feature>
<feature type="mutagenesis site" description="No effect on channel activity. No effect on interaction with membranes enriched in phosphatidylinositol-2,4-bisphosphate." evidence="28">
    <original>K</original>
    <variation>E</variation>
    <location>
        <position position="344"/>
    </location>
</feature>
<feature type="mutagenesis site" description="Loss of Ca(2+) influx. Loss of DDX3X translocation to the nucleus." evidence="31">
    <original>M</original>
    <variation>D</variation>
    <location>
        <position position="680"/>
    </location>
</feature>
<feature type="mutagenesis site" description="Loss of calmodulin binding; when associated with A-828.">
    <original>RLRRDR</original>
    <variation>ELEEDE</variation>
    <location>
        <begin position="816"/>
        <end position="821"/>
    </location>
</feature>
<feature type="mutagenesis site" description="Loss of calmodulin binding.">
    <original>RWSS</original>
    <variation>AASA</variation>
    <location>
        <begin position="821"/>
        <end position="824"/>
    </location>
</feature>
<feature type="mutagenesis site" description="Loss of Ca(2+) dependent current potentiation.">
    <original>W</original>
    <variation>A</variation>
    <location>
        <position position="822"/>
    </location>
</feature>
<feature type="mutagenesis site" description="Loss of calmodulin binding; when associated with 816-ELEEDE-821." evidence="7">
    <original>R</original>
    <variation>A</variation>
    <location>
        <position position="828"/>
    </location>
</feature>
<feature type="sequence conflict" description="In Ref. 1; AAG28029." evidence="38" ref="1">
    <original>I</original>
    <variation>V</variation>
    <location>
        <position position="385"/>
    </location>
</feature>
<feature type="sequence conflict" description="In Ref. 6; BAC06573." evidence="38" ref="6">
    <original>V</original>
    <variation>A</variation>
    <location>
        <position position="452"/>
    </location>
</feature>
<feature type="sequence conflict" description="In Ref. 1; AAG28029." evidence="38" ref="1">
    <original>D</original>
    <variation>N</variation>
    <location>
        <position position="781"/>
    </location>
</feature>
<feature type="sequence conflict" description="In Ref. 4; BAB69040." evidence="38" ref="4">
    <original>D</original>
    <variation>T</variation>
    <location>
        <position position="820"/>
    </location>
</feature>
<feature type="sequence conflict" description="In Ref. 6; BAC06573." evidence="38" ref="6">
    <original>P</original>
    <variation>T</variation>
    <location>
        <position position="861"/>
    </location>
</feature>
<feature type="sequence conflict" description="In Ref. 2; AAG16127." evidence="38" ref="2">
    <original>D</original>
    <variation>E</variation>
    <location>
        <position position="867"/>
    </location>
</feature>
<feature type="helix" evidence="48">
    <location>
        <begin position="151"/>
        <end position="160"/>
    </location>
</feature>
<feature type="helix" evidence="40">
    <location>
        <begin position="164"/>
        <end position="166"/>
    </location>
</feature>
<feature type="helix" evidence="48">
    <location>
        <begin position="169"/>
        <end position="175"/>
    </location>
</feature>
<feature type="helix" evidence="48">
    <location>
        <begin position="183"/>
        <end position="185"/>
    </location>
</feature>
<feature type="strand" evidence="48">
    <location>
        <begin position="188"/>
        <end position="190"/>
    </location>
</feature>
<feature type="helix" evidence="48">
    <location>
        <begin position="194"/>
        <end position="200"/>
    </location>
</feature>
<feature type="turn" evidence="47">
    <location>
        <begin position="204"/>
        <end position="206"/>
    </location>
</feature>
<feature type="helix" evidence="48">
    <location>
        <begin position="209"/>
        <end position="220"/>
    </location>
</feature>
<feature type="helix" evidence="48">
    <location>
        <begin position="223"/>
        <end position="226"/>
    </location>
</feature>
<feature type="strand" evidence="40">
    <location>
        <begin position="234"/>
        <end position="239"/>
    </location>
</feature>
<feature type="helix" evidence="48">
    <location>
        <begin position="241"/>
        <end position="247"/>
    </location>
</feature>
<feature type="helix" evidence="48">
    <location>
        <begin position="251"/>
        <end position="259"/>
    </location>
</feature>
<feature type="helix" evidence="48">
    <location>
        <begin position="271"/>
        <end position="273"/>
    </location>
</feature>
<feature type="turn" evidence="40">
    <location>
        <begin position="276"/>
        <end position="279"/>
    </location>
</feature>
<feature type="helix" evidence="48">
    <location>
        <begin position="288"/>
        <end position="294"/>
    </location>
</feature>
<feature type="helix" evidence="48">
    <location>
        <begin position="298"/>
        <end position="305"/>
    </location>
</feature>
<feature type="strand" evidence="46">
    <location>
        <begin position="306"/>
        <end position="309"/>
    </location>
</feature>
<feature type="helix" evidence="48">
    <location>
        <begin position="324"/>
        <end position="331"/>
    </location>
</feature>
<feature type="helix" evidence="48">
    <location>
        <begin position="336"/>
        <end position="355"/>
    </location>
</feature>
<feature type="strand" evidence="40">
    <location>
        <begin position="357"/>
        <end position="360"/>
    </location>
</feature>
<feature type="helix" evidence="48">
    <location>
        <begin position="362"/>
        <end position="364"/>
    </location>
</feature>
<feature type="strand" evidence="46">
    <location>
        <begin position="368"/>
        <end position="370"/>
    </location>
</feature>
<feature type="helix" evidence="48">
    <location>
        <begin position="373"/>
        <end position="380"/>
    </location>
</feature>
<feature type="helix" evidence="48">
    <location>
        <begin position="383"/>
        <end position="390"/>
    </location>
</feature>
<feature type="helix" evidence="48">
    <location>
        <begin position="398"/>
        <end position="400"/>
    </location>
</feature>
<feature type="strand" evidence="48">
    <location>
        <begin position="404"/>
        <end position="406"/>
    </location>
</feature>
<feature type="strand" evidence="47">
    <location>
        <begin position="411"/>
        <end position="413"/>
    </location>
</feature>
<feature type="strand" evidence="48">
    <location>
        <begin position="418"/>
        <end position="420"/>
    </location>
</feature>
<feature type="turn" evidence="48">
    <location>
        <begin position="422"/>
        <end position="424"/>
    </location>
</feature>
<feature type="strand" evidence="48">
    <location>
        <begin position="428"/>
        <end position="430"/>
    </location>
</feature>
<feature type="helix" evidence="48">
    <location>
        <begin position="433"/>
        <end position="439"/>
    </location>
</feature>
<feature type="strand" evidence="43">
    <location>
        <begin position="440"/>
        <end position="442"/>
    </location>
</feature>
<feature type="turn" evidence="46">
    <location>
        <begin position="443"/>
        <end position="445"/>
    </location>
</feature>
<feature type="helix" evidence="48">
    <location>
        <begin position="446"/>
        <end position="449"/>
    </location>
</feature>
<feature type="strand" evidence="46">
    <location>
        <begin position="450"/>
        <end position="452"/>
    </location>
</feature>
<feature type="helix" evidence="48">
    <location>
        <begin position="455"/>
        <end position="465"/>
    </location>
</feature>
<feature type="helix" evidence="48">
    <location>
        <begin position="467"/>
        <end position="490"/>
    </location>
</feature>
<feature type="strand" evidence="48">
    <location>
        <begin position="495"/>
        <end position="498"/>
    </location>
</feature>
<feature type="helix" evidence="48">
    <location>
        <begin position="505"/>
        <end position="530"/>
    </location>
</feature>
<feature type="turn" evidence="48">
    <location>
        <begin position="531"/>
        <end position="533"/>
    </location>
</feature>
<feature type="helix" evidence="42">
    <location>
        <begin position="540"/>
        <end position="543"/>
    </location>
</feature>
<feature type="turn" evidence="48">
    <location>
        <begin position="544"/>
        <end position="546"/>
    </location>
</feature>
<feature type="helix" evidence="48">
    <location>
        <begin position="547"/>
        <end position="566"/>
    </location>
</feature>
<feature type="turn" evidence="44">
    <location>
        <begin position="571"/>
        <end position="573"/>
    </location>
</feature>
<feature type="helix" evidence="48">
    <location>
        <begin position="574"/>
        <end position="586"/>
    </location>
</feature>
<feature type="helix" evidence="48">
    <location>
        <begin position="587"/>
        <end position="595"/>
    </location>
</feature>
<feature type="helix" evidence="48">
    <location>
        <begin position="597"/>
        <end position="612"/>
    </location>
</feature>
<feature type="helix" evidence="48">
    <location>
        <begin position="615"/>
        <end position="633"/>
    </location>
</feature>
<feature type="strand" evidence="48">
    <location>
        <begin position="657"/>
        <end position="661"/>
    </location>
</feature>
<feature type="strand" evidence="47">
    <location>
        <begin position="662"/>
        <end position="664"/>
    </location>
</feature>
<feature type="helix" evidence="48">
    <location>
        <begin position="665"/>
        <end position="677"/>
    </location>
</feature>
<feature type="strand" evidence="47">
    <location>
        <begin position="678"/>
        <end position="680"/>
    </location>
</feature>
<feature type="helix" evidence="45">
    <location>
        <begin position="684"/>
        <end position="688"/>
    </location>
</feature>
<feature type="strand" evidence="48">
    <location>
        <begin position="689"/>
        <end position="691"/>
    </location>
</feature>
<feature type="helix" evidence="48">
    <location>
        <begin position="692"/>
        <end position="706"/>
    </location>
</feature>
<feature type="turn" evidence="48">
    <location>
        <begin position="707"/>
        <end position="709"/>
    </location>
</feature>
<feature type="helix" evidence="48">
    <location>
        <begin position="710"/>
        <end position="746"/>
    </location>
</feature>
<feature type="helix" evidence="48">
    <location>
        <begin position="750"/>
        <end position="755"/>
    </location>
</feature>
<feature type="strand" evidence="48">
    <location>
        <begin position="759"/>
        <end position="766"/>
    </location>
</feature>
<feature type="helix" evidence="48">
    <location>
        <begin position="768"/>
        <end position="770"/>
    </location>
</feature>
<feature type="strand" evidence="48">
    <location>
        <begin position="772"/>
        <end position="779"/>
    </location>
</feature>
<feature type="strand" evidence="41">
    <location>
        <begin position="785"/>
        <end position="787"/>
    </location>
</feature>
<feature type="strand" evidence="41">
    <location>
        <begin position="795"/>
        <end position="797"/>
    </location>
</feature>
<organism>
    <name type="scientific">Homo sapiens</name>
    <name type="common">Human</name>
    <dbReference type="NCBI Taxonomy" id="9606"/>
    <lineage>
        <taxon>Eukaryota</taxon>
        <taxon>Metazoa</taxon>
        <taxon>Chordata</taxon>
        <taxon>Craniata</taxon>
        <taxon>Vertebrata</taxon>
        <taxon>Euteleostomi</taxon>
        <taxon>Mammalia</taxon>
        <taxon>Eutheria</taxon>
        <taxon>Euarchontoglires</taxon>
        <taxon>Primates</taxon>
        <taxon>Haplorrhini</taxon>
        <taxon>Catarrhini</taxon>
        <taxon>Hominidae</taxon>
        <taxon>Homo</taxon>
    </lineage>
</organism>
<protein>
    <recommendedName>
        <fullName>Transient receptor potential cation channel subfamily V member 4</fullName>
        <shortName>TrpV4</shortName>
    </recommendedName>
    <alternativeName>
        <fullName>Osm-9-like TRP channel 4</fullName>
        <shortName evidence="33">OTRPC4</shortName>
    </alternativeName>
    <alternativeName>
        <fullName>Transient receptor potential protein 12</fullName>
        <shortName>TRP12</shortName>
    </alternativeName>
    <alternativeName>
        <fullName>Vanilloid receptor-like channel 2</fullName>
    </alternativeName>
    <alternativeName>
        <fullName>Vanilloid receptor-like protein 2</fullName>
        <shortName>VRL-2</shortName>
    </alternativeName>
    <alternativeName>
        <fullName evidence="34">Vanilloid receptor-related osmotically-activated channel</fullName>
        <shortName evidence="34">VR-OAC</shortName>
    </alternativeName>
</protein>
<reference key="1">
    <citation type="journal article" date="2000" name="Cell">
        <title>Vanilloid receptor-related osmotically activated channel (VR-OAC), a candidate vertebrate osmoreceptor.</title>
        <authorList>
            <person name="Liedtke W.B."/>
            <person name="Choe Y."/>
            <person name="Marti-Renom M.A."/>
            <person name="Bell A.M."/>
            <person name="Denis C.S."/>
            <person name="Sali A."/>
            <person name="Hudspeth A.J."/>
            <person name="Friedman J.M."/>
            <person name="Heller S."/>
        </authorList>
    </citation>
    <scope>NUCLEOTIDE SEQUENCE [MRNA] (ISOFORM 1)</scope>
</reference>
<reference key="2">
    <citation type="journal article" date="2000" name="Nat. Cell Biol.">
        <title>OTRPC4, a nonselective cation channel that confers sensitivity to extracellular osmolarity.</title>
        <authorList>
            <person name="Strotmann R."/>
            <person name="Harteneck C."/>
            <person name="Nunnenmacher K."/>
            <person name="Schultz G."/>
            <person name="Plant T.D."/>
        </authorList>
    </citation>
    <scope>NUCLEOTIDE SEQUENCE [MRNA] (ISOFORM 1)</scope>
    <scope>FUNCTION</scope>
    <scope>TRANSPORTER ACTIVITY</scope>
    <source>
        <tissue>Kidney cortex</tissue>
    </source>
</reference>
<reference key="3">
    <citation type="journal article" date="2003" name="J. Biol. Chem.">
        <title>Impaired pressure sensation in mice lacking TRPV4.</title>
        <authorList>
            <person name="Suzuki M."/>
            <person name="Mizuno A."/>
            <person name="Kodaira K."/>
            <person name="Imai M."/>
        </authorList>
    </citation>
    <scope>NUCLEOTIDE SEQUENCE [MRNA] (ISOFORM 3)</scope>
</reference>
<reference key="4">
    <citation type="submission" date="1999-09" db="EMBL/GenBank/DDBJ databases">
        <title>Molecular cloning of a new member of vanilloid receptor channel-like proteins.</title>
        <authorList>
            <person name="Ishibashi K."/>
        </authorList>
    </citation>
    <scope>NUCLEOTIDE SEQUENCE [MRNA] (ISOFORM 1)</scope>
</reference>
<reference key="5">
    <citation type="submission" date="2000-11" db="EMBL/GenBank/DDBJ databases">
        <authorList>
            <person name="Kelsell R.E."/>
        </authorList>
    </citation>
    <scope>NUCLEOTIDE SEQUENCE [MRNA] (ISOFORM 1)</scope>
</reference>
<reference key="6">
    <citation type="submission" date="2001-10" db="EMBL/GenBank/DDBJ databases">
        <authorList>
            <person name="Xu F."/>
            <person name="Satoh E."/>
            <person name="Iijima T."/>
        </authorList>
    </citation>
    <scope>NUCLEOTIDE SEQUENCE [MRNA] (ISOFORM 2)</scope>
    <scope>VARIANT MTD PRO-618</scope>
    <source>
        <tissue>Aortic endothelium</tissue>
    </source>
</reference>
<reference key="7">
    <citation type="journal article" date="2006" name="J. Biol. Chem.">
        <title>Human TRPV4 channel splice variants revealed a key role of ankyrin domains in multimerization and trafficking.</title>
        <authorList>
            <person name="Arniges M."/>
            <person name="Fernandez-Fernandez J.M."/>
            <person name="Albrecht N."/>
            <person name="Schaefer M."/>
            <person name="Valverde M.A."/>
        </authorList>
    </citation>
    <scope>NUCLEOTIDE SEQUENCE [MRNA] (ISOFORMS 4; 5 AND 6)</scope>
    <scope>FUNCTION (ISOFORMS 1; 2; 4; 5 AND 6)</scope>
    <scope>TRANSPORTER ACTIVITY (ISOFORMS 1 AND 5)</scope>
    <scope>SUBCELLULAR LOCATION (ISOFORMS 1; 2; 4; 5 AND 6)</scope>
    <scope>SELF-ASSOCIATION</scope>
    <scope>GLYCOSYLATION</scope>
</reference>
<reference key="8">
    <citation type="submission" date="2005-07" db="EMBL/GenBank/DDBJ databases">
        <authorList>
            <person name="Mural R.J."/>
            <person name="Istrail S."/>
            <person name="Sutton G.G."/>
            <person name="Florea L."/>
            <person name="Halpern A.L."/>
            <person name="Mobarry C.M."/>
            <person name="Lippert R."/>
            <person name="Walenz B."/>
            <person name="Shatkay H."/>
            <person name="Dew I."/>
            <person name="Miller J.R."/>
            <person name="Flanigan M.J."/>
            <person name="Edwards N.J."/>
            <person name="Bolanos R."/>
            <person name="Fasulo D."/>
            <person name="Halldorsson B.V."/>
            <person name="Hannenhalli S."/>
            <person name="Turner R."/>
            <person name="Yooseph S."/>
            <person name="Lu F."/>
            <person name="Nusskern D.R."/>
            <person name="Shue B.C."/>
            <person name="Zheng X.H."/>
            <person name="Zhong F."/>
            <person name="Delcher A.L."/>
            <person name="Huson D.H."/>
            <person name="Kravitz S.A."/>
            <person name="Mouchard L."/>
            <person name="Reinert K."/>
            <person name="Remington K.A."/>
            <person name="Clark A.G."/>
            <person name="Waterman M.S."/>
            <person name="Eichler E.E."/>
            <person name="Adams M.D."/>
            <person name="Hunkapiller M.W."/>
            <person name="Myers E.W."/>
            <person name="Venter J.C."/>
        </authorList>
    </citation>
    <scope>NUCLEOTIDE SEQUENCE [LARGE SCALE GENOMIC DNA]</scope>
</reference>
<reference key="9">
    <citation type="journal article" date="2004" name="Genome Res.">
        <title>The status, quality, and expansion of the NIH full-length cDNA project: the Mammalian Gene Collection (MGC).</title>
        <authorList>
            <consortium name="The MGC Project Team"/>
        </authorList>
    </citation>
    <scope>NUCLEOTIDE SEQUENCE [LARGE SCALE MRNA] (ISOFORM 1)</scope>
    <source>
        <tissue>Colon</tissue>
    </source>
</reference>
<reference key="10">
    <citation type="submission" date="2000-06" db="EMBL/GenBank/DDBJ databases">
        <title>Cloning of mouse and human vanilloid receptor-like protein 2 (VRL-2).</title>
        <authorList>
            <person name="Derst C."/>
            <person name="Schafer M.K."/>
        </authorList>
    </citation>
    <scope>NUCLEOTIDE SEQUENCE [MRNA] OF 69-871</scope>
</reference>
<reference key="11">
    <citation type="journal article" date="2003" name="J. Biol. Chem.">
        <title>Ca2+-dependent potentiation of the nonselective cation channel TRPV4 is mediated by a C-terminal calmodulin binding site.</title>
        <authorList>
            <person name="Strotmann R."/>
            <person name="Schultz G."/>
            <person name="Plant T.D."/>
        </authorList>
    </citation>
    <scope>FUNCTION</scope>
    <scope>INTERACTION WITH CALMODULIN</scope>
    <scope>MUTAGENESIS OF 186-ARG--SER-824 AND ARG-828</scope>
</reference>
<reference key="12">
    <citation type="journal article" date="2006" name="Am. J. Physiol.">
        <title>WNK kinases influence TRPV4 channel function and localization.</title>
        <authorList>
            <person name="Fu Y."/>
            <person name="Subramanya A."/>
            <person name="Rozansky D."/>
            <person name="Cohen D.M."/>
        </authorList>
    </citation>
    <scope>SUBCELLULAR LOCATION</scope>
</reference>
<reference key="13">
    <citation type="journal article" date="2008" name="J. Biol. Chem.">
        <title>IP3 receptor binds to and sensitizes TRPV4 channel to osmotic stimuli via a calmodulin-binding site.</title>
        <authorList>
            <person name="Garcia-Elias A."/>
            <person name="Lorenzo I.M."/>
            <person name="Vicente R."/>
            <person name="Valverde M.A."/>
        </authorList>
    </citation>
    <scope>FUNCTION</scope>
    <scope>TRANSPORTER ACTIVITY</scope>
    <scope>INTERACTION WITH ITPR3</scope>
    <scope>SUBCELLULAR LOCATION</scope>
</reference>
<reference key="14">
    <citation type="journal article" date="2008" name="J. Cell Biol.">
        <title>TRPP2 and TRPV4 form a polymodal sensory channel complex.</title>
        <authorList>
            <person name="Kottgen M."/>
            <person name="Buchholz B."/>
            <person name="Garcia-Gonzalez M.A."/>
            <person name="Kotsis F."/>
            <person name="Fu X."/>
            <person name="Doerken M."/>
            <person name="Boehlke C."/>
            <person name="Steffl D."/>
            <person name="Tauber R."/>
            <person name="Wegierski T."/>
            <person name="Nitschke R."/>
            <person name="Suzuki M."/>
            <person name="Kramer-Zucker A."/>
            <person name="Germino G.G."/>
            <person name="Watnick T."/>
            <person name="Prenen J."/>
            <person name="Nilius B."/>
            <person name="Kuehn E.W."/>
            <person name="Walz G."/>
        </authorList>
    </citation>
    <scope>FUNCTION</scope>
    <scope>TRANSPORTER ACTIVITY</scope>
    <scope>INTERACTION WITH PKD2</scope>
    <scope>SUBCELLULAR LOCATION</scope>
</reference>
<reference key="15">
    <citation type="journal article" date="2009" name="Am. J. Physiol.">
        <title>An environmental sensor, TRPV4 is a novel regulator of intracellular Ca2+ in human synoviocytes.</title>
        <authorList>
            <person name="Itoh Y."/>
            <person name="Hatano N."/>
            <person name="Hayashi H."/>
            <person name="Onozaki K."/>
            <person name="Miyazawa K."/>
            <person name="Muraki K."/>
        </authorList>
    </citation>
    <scope>FUNCTION</scope>
    <scope>TISSUE SPECIFICITY</scope>
</reference>
<reference key="16">
    <citation type="journal article" date="2009" name="Proc. Natl. Acad. Sci. U.S.A.">
        <title>A loss-of-function nonsynonymous polymorphism in the osmoregulatory TRPV4 gene is associated with human hyponatremia.</title>
        <authorList>
            <person name="Tian W."/>
            <person name="Fu Y."/>
            <person name="Garcia-Elias A."/>
            <person name="Fernandez-Fernandez J.M."/>
            <person name="Vicente R."/>
            <person name="Kramer P.L."/>
            <person name="Klein R.F."/>
            <person name="Hitzemann R."/>
            <person name="Orwoll E.S."/>
            <person name="Wilmot B."/>
            <person name="McWeeney S."/>
            <person name="Valverde M.A."/>
            <person name="Cohen D.M."/>
        </authorList>
    </citation>
    <scope>INVOLVEMENT IN SSQTL1</scope>
    <scope>ASSOCIATION OF VARIANT SER-19 WITH HYPONATREMIA</scope>
</reference>
<reference key="17">
    <citation type="journal article" date="2012" name="Hum. Mol. Genet.">
        <title>Megalencephalic leukoencephalopathy with subcortical cysts protein 1 functionally cooperates with the TRPV4 cation channel to activate the response of astrocytes to osmotic stress: dysregulation by pathological mutations.</title>
        <authorList>
            <person name="Lanciotti A."/>
            <person name="Brignone M.S."/>
            <person name="Molinari P."/>
            <person name="Visentin S."/>
            <person name="De Nuccio C."/>
            <person name="Macchia G."/>
            <person name="Aiello C."/>
            <person name="Bertini E."/>
            <person name="Aloisi F."/>
            <person name="Petrucci T.C."/>
            <person name="Ambrosini E."/>
        </authorList>
    </citation>
    <scope>SUBUNIT</scope>
</reference>
<reference key="18">
    <citation type="journal article" date="2012" name="Sci. Transl. Med.">
        <title>An orally active TRPV4 channel blocker prevents and resolves pulmonary edema induced by heart failure.</title>
        <authorList>
            <person name="Thorneloe K.S."/>
            <person name="Cheung M."/>
            <person name="Bao W."/>
            <person name="Alsaid H."/>
            <person name="Lenhard S."/>
            <person name="Jian M.Y."/>
            <person name="Costell M."/>
            <person name="Maniscalco-Hauk K."/>
            <person name="Krawiec J.A."/>
            <person name="Olzinski A."/>
            <person name="Gordon E."/>
            <person name="Lozinskaya I."/>
            <person name="Elefante L."/>
            <person name="Qin P."/>
            <person name="Matasic D.S."/>
            <person name="James C."/>
            <person name="Tunstead J."/>
            <person name="Donovan B."/>
            <person name="Kallal L."/>
            <person name="Waszkiewicz A."/>
            <person name="Vaidya K."/>
            <person name="Davenport E.A."/>
            <person name="Larkin J."/>
            <person name="Burgert M."/>
            <person name="Casillas L.N."/>
            <person name="Marquis R.W."/>
            <person name="Ye G."/>
            <person name="Eidam H.S."/>
            <person name="Goodman K.B."/>
            <person name="Toomey J.R."/>
            <person name="Roethke T.J."/>
            <person name="Jucker B.M."/>
            <person name="Schnackenberg C.G."/>
            <person name="Townsley M.I."/>
            <person name="Lepore J.J."/>
            <person name="Willette R.N."/>
        </authorList>
    </citation>
    <scope>FUNCTION</scope>
    <scope>TRANSPORTER ACTIVITY</scope>
</reference>
<reference key="19">
    <citation type="journal article" date="2014" name="Nat. Commun.">
        <title>TRPV4 channel activity is modulated by direct interaction of the ankyrin domain to PI(4,5)P.</title>
        <authorList>
            <person name="Takahashi N."/>
            <person name="Hamada-Nakahara S."/>
            <person name="Itoh Y."/>
            <person name="Takemura K."/>
            <person name="Shimada A."/>
            <person name="Ueda Y."/>
            <person name="Kitamata M."/>
            <person name="Matsuoka R."/>
            <person name="Hanawa-Suetsugu K."/>
            <person name="Senju Y."/>
            <person name="Mori M.X."/>
            <person name="Kiyonaka S."/>
            <person name="Kohda D."/>
            <person name="Kitao A."/>
            <person name="Mori Y."/>
            <person name="Suetsugu S."/>
        </authorList>
    </citation>
    <scope>FUNCTION</scope>
    <scope>TRANSPORTER ACTIVITY</scope>
    <scope>ACTIVITY REGULATION</scope>
    <scope>SUBCELLULAR LOCATION</scope>
    <scope>DOMAIN</scope>
    <scope>MUTAGENESIS OF LYS-251; ASN-296; HIS-299 AND LYS-344</scope>
    <scope>CHARACTERIZATION OF VARIANTS CMT2C CYS-232; HIS-269; TRP-315 AND HIS-316</scope>
</reference>
<reference key="20">
    <citation type="journal article" date="2015" name="Am. J. Med. Genet. A">
        <title>A mutation in TRPV4 results in altered chondrocyte calcium signaling in severe metatropic dysplasia.</title>
        <authorList>
            <person name="Hurd L."/>
            <person name="Kirwin S.M."/>
            <person name="Boggs M."/>
            <person name="Mackenzie W.G."/>
            <person name="Bober M.B."/>
            <person name="Funanage V.L."/>
            <person name="Duncan R.L."/>
        </authorList>
    </citation>
    <scope>FUNCTION</scope>
    <scope>VARIANT MTD LEU-799</scope>
    <scope>CHARACTERIZATION OF VARIANT MTD LEU-799</scope>
</reference>
<reference key="21">
    <citation type="journal article" date="2016" name="J. Med. Genet.">
        <title>Gain-of-function mutation in TRPV4 identified in patients with osteonecrosis of the femoral head.</title>
        <authorList>
            <person name="Mah W."/>
            <person name="Sonkusare S.K."/>
            <person name="Wang T."/>
            <person name="Azeddine B."/>
            <person name="Pupavac M."/>
            <person name="Carrot-Zhang J."/>
            <person name="Hong K."/>
            <person name="Majewski J."/>
            <person name="Harvey E.J."/>
            <person name="Russell L."/>
            <person name="Chalk C."/>
            <person name="Rosenblatt D.S."/>
            <person name="Nelson M.T."/>
            <person name="Seguin C."/>
        </authorList>
    </citation>
    <scope>INVOLVEMENT IN ANFH2</scope>
</reference>
<reference key="22">
    <citation type="journal article" date="2018" name="Nat. Commun.">
        <title>The TRPV4 channel links calcium influx to DDX3X activity and viral infectivity.</title>
        <authorList>
            <person name="Donate-Macian P."/>
            <person name="Jungfleisch J."/>
            <person name="Perez-Vilaro G."/>
            <person name="Rubio-Moscardo F."/>
            <person name="Peralvarez-Marin A."/>
            <person name="Diez J."/>
            <person name="Valverde M.A."/>
        </authorList>
    </citation>
    <scope>FUNCTION</scope>
    <scope>TRANSPORTER ACTIVITY</scope>
    <scope>FUNCTION (MICROBIAL INFECTION)</scope>
    <scope>INTERACTION WITH DDX3X</scope>
    <scope>SUBCELLULAR LOCATION</scope>
    <scope>MUTAGENESIS OF MET-680</scope>
</reference>
<reference key="23">
    <citation type="journal article" date="2012" name="Biochemistry">
        <title>Structural and biochemical consequences of disease-causing mutations in the ankyrin repeat domain of the human TRPV4 channel.</title>
        <authorList>
            <person name="Inada H."/>
            <person name="Procko E."/>
            <person name="Sotomayor M."/>
            <person name="Gaudet R."/>
        </authorList>
    </citation>
    <scope>X-RAY CRYSTALLOGRAPHY (2.85 ANGSTROMS) OF 149-397 ALONE AND IN COMPLEX WITH ATP</scope>
    <scope>MUTAGENESIS OF PHE-231</scope>
    <scope>CHARACTERIZATION OF VARIANTS MTD ARG-197; PHE-199; ALA-295; PHE-331; THR-331 AND PHE-342</scope>
    <scope>CHARACTERIZATION OF VARIANTS SMDK LYS-278 AND GLY-333</scope>
    <scope>CHARACTERIZATION OF VARIANTS CMT2C CYS-232; HIS-269; TRP-315 AND CYS-316</scope>
    <scope>CHARACTERIZATION OF VARIANT SPSMA CYS-316</scope>
    <scope>CHARACTERIZATION OF VARIANT LYS-183</scope>
    <scope>CHARACTERIZATION OF VARIANTS HMND8 CYS-232 AND HIS-269</scope>
</reference>
<reference key="24">
    <citation type="journal article" date="2008" name="Nat. Genet.">
        <title>Gain-of-function mutations in TRPV4 cause autosomal dominant brachyolmia.</title>
        <authorList>
            <person name="Rock M.J."/>
            <person name="Prenen J."/>
            <person name="Funari V.A."/>
            <person name="Funari T.L."/>
            <person name="Merriman B."/>
            <person name="Nelson S.F."/>
            <person name="Lachman R.S."/>
            <person name="Wilcox W.R."/>
            <person name="Reyno S."/>
            <person name="Quadrelli R."/>
            <person name="Vaglio A."/>
            <person name="Owsianik G."/>
            <person name="Janssens A."/>
            <person name="Voets T."/>
            <person name="Ikegawa S."/>
            <person name="Nagai T."/>
            <person name="Rimoin D.L."/>
            <person name="Nilius B."/>
            <person name="Cohn D.H."/>
        </authorList>
    </citation>
    <scope>VARIANTS BCYM3 GLN-616 AND ILE-620</scope>
    <scope>CHARACTERIZATION OF VARIANTS BCYM3 GLN-616 AND ILE-620</scope>
    <scope>FUNCTION</scope>
    <scope>TRANSPORTER ACTIVITY</scope>
</reference>
<reference key="25">
    <citation type="journal article" date="2009" name="Am. J. Hum. Genet.">
        <title>Mutations in the gene encoding the calcium-permeable ion channel TRPV4 produce spondylometaphyseal dysplasia, Kozlowski type and metatropic dysplasia.</title>
        <authorList>
            <person name="Krakow D."/>
            <person name="Vriens J."/>
            <person name="Camacho N."/>
            <person name="Luong P."/>
            <person name="Deixler H."/>
            <person name="Funari T.L."/>
            <person name="Bacino C.A."/>
            <person name="Irons M.B."/>
            <person name="Holm I.A."/>
            <person name="Sadler L."/>
            <person name="Okenfuss E.B."/>
            <person name="Janssens A."/>
            <person name="Voets T."/>
            <person name="Rimoin D.L."/>
            <person name="Lachman R.S."/>
            <person name="Nilius B."/>
            <person name="Cohn D.H."/>
        </authorList>
    </citation>
    <scope>VARIANTS SMDK GLY-333; HIS-594 AND SER-716</scope>
    <scope>VARIANTS MTD PHE-331 AND LEU-799</scope>
</reference>
<reference key="26">
    <citation type="journal article" date="2010" name="Am. J. Med. Genet. A">
        <title>Dominant TRPV4 mutations in nonlethal and lethal metatropic dysplasia.</title>
        <authorList>
            <person name="Camacho N."/>
            <person name="Krakow D."/>
            <person name="Johnykutty S."/>
            <person name="Katzman P.J."/>
            <person name="Pepkowitz S."/>
            <person name="Vriens J."/>
            <person name="Nilius B."/>
            <person name="Boyce B.F."/>
            <person name="Cohn D.H."/>
        </authorList>
    </citation>
    <scope>VARIANTS MTD ILE-89; ARG-197; PHE-331; PHE-471 DEL; MET-604; LEU-617; PRO-618; LYS-797 AND LEU-799</scope>
</reference>
<reference key="27">
    <citation type="journal article" date="2010" name="Am. J. Med. Genet. A">
        <title>Spondylo-epiphyseal dysplasia, Maroteaux type (pseudo-Morquio syndrome type 2), and parastremmatic dysplasia are caused by TRPV4 mutations.</title>
        <authorList>
            <person name="Nishimura G."/>
            <person name="Dai J."/>
            <person name="Lausch E."/>
            <person name="Unger S."/>
            <person name="Megarbane A."/>
            <person name="Kitoh H."/>
            <person name="Kim O.H."/>
            <person name="Cho T.J."/>
            <person name="Bedeschi F."/>
            <person name="Benedicenti F."/>
            <person name="Mendoza-Londono R."/>
            <person name="Silengo M."/>
            <person name="Schmidt-Rimpler M."/>
            <person name="Spranger J."/>
            <person name="Zabel B."/>
            <person name="Ikegawa S."/>
            <person name="Superti-Furga A."/>
        </authorList>
    </citation>
    <scope>INVOLVEMENT IN SEDM</scope>
    <scope>VARIANT PSTD HIS-594</scope>
    <scope>VARIANTS LYS-183; CYS-602; LYS-797 AND LEU-799</scope>
</reference>
<reference key="28">
    <citation type="journal article" date="2010" name="J. Med. Genet.">
        <title>Novel and recurrent TRPV4 mutations and their association with distinct phenotypes within the TRPV4 dysplasia family.</title>
        <authorList>
            <person name="Dai J."/>
            <person name="Kim O.H."/>
            <person name="Cho T.J."/>
            <person name="Schmidt-Rimpler M."/>
            <person name="Tonoki H."/>
            <person name="Takikawa K."/>
            <person name="Haga N."/>
            <person name="Miyoshi K."/>
            <person name="Kitoh H."/>
            <person name="Yoo W.J."/>
            <person name="Choi I.H."/>
            <person name="Song H.R."/>
            <person name="Jin D.K."/>
            <person name="Kim H.T."/>
            <person name="Kamasaki H."/>
            <person name="Bianchi P."/>
            <person name="Grigelioniene G."/>
            <person name="Nampoothiri S."/>
            <person name="Minagawa M."/>
            <person name="Miyagawa S.I."/>
            <person name="Fukao T."/>
            <person name="Marcelis C."/>
            <person name="Jansweijer M.C."/>
            <person name="Hennekam R.C."/>
            <person name="Bedeschi F."/>
            <person name="Mustonen A."/>
            <person name="Jiang Q."/>
            <person name="Ohashi H."/>
            <person name="Furuichi T."/>
            <person name="Unger S."/>
            <person name="Zabel B."/>
            <person name="Lausch E."/>
            <person name="Superti-Furga A."/>
            <person name="Nishimura G."/>
            <person name="Ikegawa S."/>
        </authorList>
    </citation>
    <scope>VARIANTS MTD PHE-199; ALA-295; THR-331; PHE-342; PHE-471 DEL; LEU-592; LYS-775; ALA-799; SER-799; LEU-799 AND ARG-799</scope>
    <scope>VARIANTS SMDK LYS-278; HIS-594; PRO-596; TRP-600; ILE-625; MET-709; TYR-777 AND LYS-797</scope>
</reference>
<reference key="29">
    <citation type="journal article" date="2010" name="Nat. Genet.">
        <title>Alterations in the ankyrin domain of TRPV4 cause congenital distal SMA, scapuloperoneal SMA and HMSN2C.</title>
        <authorList>
            <person name="Auer-Grumbach M."/>
            <person name="Olschewski A."/>
            <person name="Papic L."/>
            <person name="Kremer H."/>
            <person name="McEntagart M.E."/>
            <person name="Uhrig S."/>
            <person name="Fischer C."/>
            <person name="Frohlich E."/>
            <person name="Balint Z."/>
            <person name="Tang B."/>
            <person name="Strohmaier H."/>
            <person name="Lochmuller H."/>
            <person name="Schlotter-Weigel B."/>
            <person name="Senderek J."/>
            <person name="Krebs A."/>
            <person name="Dick K.J."/>
            <person name="Petty R."/>
            <person name="Longman C."/>
            <person name="Anderson N.E."/>
            <person name="Padberg G.W."/>
            <person name="Schelhaas H.J."/>
            <person name="van Ravenswaaij-Arts C.M."/>
            <person name="Pieber T.R."/>
            <person name="Crosby A.H."/>
            <person name="Guelly C."/>
        </authorList>
    </citation>
    <scope>VARIANTS CMT2C TRP-315 AND CYS-316</scope>
    <scope>VARIANT HMND8 HIS-269</scope>
    <scope>SUBCELLULAR LOCATION</scope>
</reference>
<reference key="30">
    <citation type="journal article" date="2010" name="Nat. Genet.">
        <title>Scapuloperoneal spinal muscular atrophy and CMT2C are allelic disorders caused by alterations in TRPV4.</title>
        <authorList>
            <person name="Deng H.X."/>
            <person name="Klein C.J."/>
            <person name="Yan J."/>
            <person name="Shi Y."/>
            <person name="Wu Y."/>
            <person name="Fecto F."/>
            <person name="Yau H.J."/>
            <person name="Yang Y."/>
            <person name="Zhai H."/>
            <person name="Siddique N."/>
            <person name="Hedley-Whyte E.T."/>
            <person name="Delong R."/>
            <person name="Martina M."/>
            <person name="Dyck P.J."/>
            <person name="Siddique T."/>
        </authorList>
    </citation>
    <scope>VARIANT CMT2C HIS-269</scope>
    <scope>VARIANT SPSMA CYS-316</scope>
    <scope>SUBCELLULAR LOCATION</scope>
</reference>
<reference key="31">
    <citation type="journal article" date="2010" name="Nat. Genet.">
        <title>Mutations in TRPV4 cause Charcot-Marie-Tooth disease type 2C.</title>
        <authorList>
            <person name="Landoure G."/>
            <person name="Zdebik A.A."/>
            <person name="Martinez T.L."/>
            <person name="Burnett B.G."/>
            <person name="Stanescu H.C."/>
            <person name="Inada H."/>
            <person name="Shi Y."/>
            <person name="Taye A.A."/>
            <person name="Kong L."/>
            <person name="Munns C.H."/>
            <person name="Choo S.S."/>
            <person name="Phelps C.B."/>
            <person name="Paudel R."/>
            <person name="Houlden H."/>
            <person name="Ludlow C.L."/>
            <person name="Caterina M.J."/>
            <person name="Gaudet R."/>
            <person name="Kleta R."/>
            <person name="Fischbeck K.H."/>
            <person name="Sumner C.J."/>
        </authorList>
    </citation>
    <scope>VARIANTS CMT2C CYS-269 AND HIS-269</scope>
    <scope>CHARACTERIZATION OF VARIANTS CMT2C CYS-269 AND HIS-269</scope>
    <scope>FUNCTION</scope>
    <scope>TRANSPORTER ACTIVITY</scope>
</reference>
<reference key="32">
    <citation type="journal article" date="2010" name="Neurology">
        <title>CMT2C with vocal cord paresis associated with short stature and mutations in the TRPV4 gene.</title>
        <authorList>
            <person name="Chen D.H."/>
            <person name="Sul Y."/>
            <person name="Weiss M."/>
            <person name="Hillel A."/>
            <person name="Lipe H."/>
            <person name="Wolff J."/>
            <person name="Matsushita M."/>
            <person name="Raskind W."/>
            <person name="Bird T."/>
        </authorList>
    </citation>
    <scope>VARIANTS CMT2C TRP-315 AND TYR-542</scope>
</reference>
<reference key="33">
    <citation type="journal article" date="2011" name="Nat. Genet.">
        <title>Mutations in TRPV4 cause an inherited arthropathy of hands and feet.</title>
        <authorList>
            <person name="Lamande S.R."/>
            <person name="Yuan Y."/>
            <person name="Gresshoff I.L."/>
            <person name="Rowley L."/>
            <person name="Belluoccio D."/>
            <person name="Kaluarachchi K."/>
            <person name="Little C.B."/>
            <person name="Botzenhart E."/>
            <person name="Zerres K."/>
            <person name="Amor D.J."/>
            <person name="Cole W.G."/>
            <person name="Savarirayan R."/>
            <person name="McIntyre P."/>
            <person name="Bateman J.F."/>
        </authorList>
    </citation>
    <scope>VARIANTS FDAB VAL-270; PRO-271 AND LEU-273</scope>
    <scope>CHARACTERIZATION OF VARIANTS FDAB VAL-270; PRO-271 AND LEU-273</scope>
    <scope>FUNCTION</scope>
    <scope>TRANSPORTER ACTIVITY</scope>
    <scope>SUBCELLULAR LOCATION</scope>
    <scope>GLYCOSYLATION</scope>
</reference>
<reference key="34">
    <citation type="journal article" date="2011" name="Neurology">
        <title>TRPV4 mutations and cytotoxic hypercalcemia in axonal Charcot-Marie-Tooth neuropathies.</title>
        <authorList>
            <person name="Klein C.J."/>
            <person name="Shi Y."/>
            <person name="Fecto F."/>
            <person name="Donaghy M."/>
            <person name="Nicholson G."/>
            <person name="McEntagart M.E."/>
            <person name="Crosby A.H."/>
            <person name="Wu Y."/>
            <person name="Lou H."/>
            <person name="McEvoy K.M."/>
            <person name="Siddique T."/>
            <person name="Deng H.X."/>
            <person name="Dyck P.J."/>
        </authorList>
    </citation>
    <scope>VARIANTS CMT2C CYS-232 AND HIS-316</scope>
    <scope>CHARACTERIZATION OF VARIANTS CMT2C CYS-232; CYS-269; HIS-269 AND HIS-316</scope>
</reference>
<reference key="35">
    <citation type="journal article" date="2012" name="Neurogenetics">
        <title>TRPV4 mutations in children with congenital distal spinal muscular atrophy.</title>
        <authorList>
            <person name="Fiorillo C."/>
            <person name="Moro F."/>
            <person name="Brisca G."/>
            <person name="Astrea G."/>
            <person name="Nesti C."/>
            <person name="Balint Z."/>
            <person name="Olschewski A."/>
            <person name="Meschini M.C."/>
            <person name="Guelly C."/>
            <person name="Auer-Grumbach M."/>
            <person name="Battini R."/>
            <person name="Pedemonte M."/>
            <person name="Romano A."/>
            <person name="Menchise V."/>
            <person name="Biancheri R."/>
            <person name="Santorelli F.M."/>
            <person name="Bruno C."/>
        </authorList>
    </citation>
    <scope>VARIANTS HMND8 ARG-97 AND CYS-232</scope>
    <scope>CHARACTERIZATION OF VARIANT HMND8 ARG-97</scope>
    <scope>FUNCTION</scope>
    <scope>TRANSPORTER ACTIVITY</scope>
</reference>